<keyword id="KW-0002">3D-structure</keyword>
<keyword id="KW-0025">Alternative splicing</keyword>
<keyword id="KW-0106">Calcium</keyword>
<keyword id="KW-0130">Cell adhesion</keyword>
<keyword id="KW-0165">Cleavage on pair of basic residues</keyword>
<keyword id="KW-0903">Direct protein sequencing</keyword>
<keyword id="KW-0225">Disease variant</keyword>
<keyword id="KW-1015">Disulfide bond</keyword>
<keyword id="KW-0325">Glycoprotein</keyword>
<keyword id="KW-0401">Integrin</keyword>
<keyword id="KW-0472">Membrane</keyword>
<keyword id="KW-0479">Metal-binding</keyword>
<keyword id="KW-1267">Proteomics identification</keyword>
<keyword id="KW-0873">Pyrrolidone carboxylic acid</keyword>
<keyword id="KW-0675">Receptor</keyword>
<keyword id="KW-1185">Reference proteome</keyword>
<keyword id="KW-0677">Repeat</keyword>
<keyword id="KW-0732">Signal</keyword>
<keyword id="KW-0812">Transmembrane</keyword>
<keyword id="KW-1133">Transmembrane helix</keyword>
<reference key="1">
    <citation type="journal article" date="1987" name="J. Biol. Chem.">
        <title>Structure of the platelet membrane glycoprotein IIb. Homology to the alpha subunits of the vitronectin and fibronectin membrane receptors.</title>
        <authorList>
            <person name="Poncz M."/>
            <person name="Eisman R."/>
            <person name="Heidenreich R."/>
            <person name="Silver S.M."/>
            <person name="Vilaire G."/>
            <person name="Surrey S."/>
            <person name="Schwartz E."/>
            <person name="Bennett J.S."/>
        </authorList>
    </citation>
    <scope>NUCLEOTIDE SEQUENCE [MRNA] (ISOFORM 1)</scope>
    <scope>VARIANT ALA-313</scope>
</reference>
<reference key="2">
    <citation type="journal article" date="1990" name="Mol. Biol. Rep.">
        <title>GPIIb and GPIIIa amino acid sequences deduced from human megakaryocyte cDNAs.</title>
        <authorList>
            <person name="Frachet P."/>
            <person name="Uzan G."/>
            <person name="Thevenon D."/>
            <person name="Denarier E."/>
            <person name="Prandini M.H."/>
            <person name="Marguerie G."/>
        </authorList>
    </citation>
    <scope>NUCLEOTIDE SEQUENCE [MRNA] (ISOFORM 1)</scope>
    <scope>VARIANT ALA-313</scope>
</reference>
<reference key="3">
    <citation type="journal article" date="1990" name="Biochemistry">
        <title>Organization of the gene for platelet glycoprotein IIb.</title>
        <authorList>
            <person name="Heidenreich R."/>
            <person name="Eisman R."/>
            <person name="Surrey S."/>
            <person name="Delgrosso K."/>
            <person name="Bennett J.S."/>
            <person name="Schwartz E."/>
            <person name="Poncz M."/>
        </authorList>
    </citation>
    <scope>NUCLEOTIDE SEQUENCE [GENOMIC DNA] (ISOFORM 1)</scope>
</reference>
<reference key="4">
    <citation type="journal article" date="2004" name="Nat. Genet.">
        <title>Complete sequencing and characterization of 21,243 full-length human cDNAs.</title>
        <authorList>
            <person name="Ota T."/>
            <person name="Suzuki Y."/>
            <person name="Nishikawa T."/>
            <person name="Otsuki T."/>
            <person name="Sugiyama T."/>
            <person name="Irie R."/>
            <person name="Wakamatsu A."/>
            <person name="Hayashi K."/>
            <person name="Sato H."/>
            <person name="Nagai K."/>
            <person name="Kimura K."/>
            <person name="Makita H."/>
            <person name="Sekine M."/>
            <person name="Obayashi M."/>
            <person name="Nishi T."/>
            <person name="Shibahara T."/>
            <person name="Tanaka T."/>
            <person name="Ishii S."/>
            <person name="Yamamoto J."/>
            <person name="Saito K."/>
            <person name="Kawai Y."/>
            <person name="Isono Y."/>
            <person name="Nakamura Y."/>
            <person name="Nagahari K."/>
            <person name="Murakami K."/>
            <person name="Yasuda T."/>
            <person name="Iwayanagi T."/>
            <person name="Wagatsuma M."/>
            <person name="Shiratori A."/>
            <person name="Sudo H."/>
            <person name="Hosoiri T."/>
            <person name="Kaku Y."/>
            <person name="Kodaira H."/>
            <person name="Kondo H."/>
            <person name="Sugawara M."/>
            <person name="Takahashi M."/>
            <person name="Kanda K."/>
            <person name="Yokoi T."/>
            <person name="Furuya T."/>
            <person name="Kikkawa E."/>
            <person name="Omura Y."/>
            <person name="Abe K."/>
            <person name="Kamihara K."/>
            <person name="Katsuta N."/>
            <person name="Sato K."/>
            <person name="Tanikawa M."/>
            <person name="Yamazaki M."/>
            <person name="Ninomiya K."/>
            <person name="Ishibashi T."/>
            <person name="Yamashita H."/>
            <person name="Murakawa K."/>
            <person name="Fujimori K."/>
            <person name="Tanai H."/>
            <person name="Kimata M."/>
            <person name="Watanabe M."/>
            <person name="Hiraoka S."/>
            <person name="Chiba Y."/>
            <person name="Ishida S."/>
            <person name="Ono Y."/>
            <person name="Takiguchi S."/>
            <person name="Watanabe S."/>
            <person name="Yosida M."/>
            <person name="Hotuta T."/>
            <person name="Kusano J."/>
            <person name="Kanehori K."/>
            <person name="Takahashi-Fujii A."/>
            <person name="Hara H."/>
            <person name="Tanase T.-O."/>
            <person name="Nomura Y."/>
            <person name="Togiya S."/>
            <person name="Komai F."/>
            <person name="Hara R."/>
            <person name="Takeuchi K."/>
            <person name="Arita M."/>
            <person name="Imose N."/>
            <person name="Musashino K."/>
            <person name="Yuuki H."/>
            <person name="Oshima A."/>
            <person name="Sasaki N."/>
            <person name="Aotsuka S."/>
            <person name="Yoshikawa Y."/>
            <person name="Matsunawa H."/>
            <person name="Ichihara T."/>
            <person name="Shiohata N."/>
            <person name="Sano S."/>
            <person name="Moriya S."/>
            <person name="Momiyama H."/>
            <person name="Satoh N."/>
            <person name="Takami S."/>
            <person name="Terashima Y."/>
            <person name="Suzuki O."/>
            <person name="Nakagawa S."/>
            <person name="Senoh A."/>
            <person name="Mizoguchi H."/>
            <person name="Goto Y."/>
            <person name="Shimizu F."/>
            <person name="Wakebe H."/>
            <person name="Hishigaki H."/>
            <person name="Watanabe T."/>
            <person name="Sugiyama A."/>
            <person name="Takemoto M."/>
            <person name="Kawakami B."/>
            <person name="Yamazaki M."/>
            <person name="Watanabe K."/>
            <person name="Kumagai A."/>
            <person name="Itakura S."/>
            <person name="Fukuzumi Y."/>
            <person name="Fujimori Y."/>
            <person name="Komiyama M."/>
            <person name="Tashiro H."/>
            <person name="Tanigami A."/>
            <person name="Fujiwara T."/>
            <person name="Ono T."/>
            <person name="Yamada K."/>
            <person name="Fujii Y."/>
            <person name="Ozaki K."/>
            <person name="Hirao M."/>
            <person name="Ohmori Y."/>
            <person name="Kawabata A."/>
            <person name="Hikiji T."/>
            <person name="Kobatake N."/>
            <person name="Inagaki H."/>
            <person name="Ikema Y."/>
            <person name="Okamoto S."/>
            <person name="Okitani R."/>
            <person name="Kawakami T."/>
            <person name="Noguchi S."/>
            <person name="Itoh T."/>
            <person name="Shigeta K."/>
            <person name="Senba T."/>
            <person name="Matsumura K."/>
            <person name="Nakajima Y."/>
            <person name="Mizuno T."/>
            <person name="Morinaga M."/>
            <person name="Sasaki M."/>
            <person name="Togashi T."/>
            <person name="Oyama M."/>
            <person name="Hata H."/>
            <person name="Watanabe M."/>
            <person name="Komatsu T."/>
            <person name="Mizushima-Sugano J."/>
            <person name="Satoh T."/>
            <person name="Shirai Y."/>
            <person name="Takahashi Y."/>
            <person name="Nakagawa K."/>
            <person name="Okumura K."/>
            <person name="Nagase T."/>
            <person name="Nomura N."/>
            <person name="Kikuchi H."/>
            <person name="Masuho Y."/>
            <person name="Yamashita R."/>
            <person name="Nakai K."/>
            <person name="Yada T."/>
            <person name="Nakamura Y."/>
            <person name="Ohara O."/>
            <person name="Isogai T."/>
            <person name="Sugano S."/>
        </authorList>
    </citation>
    <scope>NUCLEOTIDE SEQUENCE [LARGE SCALE MRNA] (ISOFORM 1)</scope>
    <source>
        <tissue>Spleen</tissue>
    </source>
</reference>
<reference key="5">
    <citation type="journal article" date="2006" name="Nature">
        <title>DNA sequence of human chromosome 17 and analysis of rearrangement in the human lineage.</title>
        <authorList>
            <person name="Zody M.C."/>
            <person name="Garber M."/>
            <person name="Adams D.J."/>
            <person name="Sharpe T."/>
            <person name="Harrow J."/>
            <person name="Lupski J.R."/>
            <person name="Nicholson C."/>
            <person name="Searle S.M."/>
            <person name="Wilming L."/>
            <person name="Young S.K."/>
            <person name="Abouelleil A."/>
            <person name="Allen N.R."/>
            <person name="Bi W."/>
            <person name="Bloom T."/>
            <person name="Borowsky M.L."/>
            <person name="Bugalter B.E."/>
            <person name="Butler J."/>
            <person name="Chang J.L."/>
            <person name="Chen C.-K."/>
            <person name="Cook A."/>
            <person name="Corum B."/>
            <person name="Cuomo C.A."/>
            <person name="de Jong P.J."/>
            <person name="DeCaprio D."/>
            <person name="Dewar K."/>
            <person name="FitzGerald M."/>
            <person name="Gilbert J."/>
            <person name="Gibson R."/>
            <person name="Gnerre S."/>
            <person name="Goldstein S."/>
            <person name="Grafham D.V."/>
            <person name="Grocock R."/>
            <person name="Hafez N."/>
            <person name="Hagopian D.S."/>
            <person name="Hart E."/>
            <person name="Norman C.H."/>
            <person name="Humphray S."/>
            <person name="Jaffe D.B."/>
            <person name="Jones M."/>
            <person name="Kamal M."/>
            <person name="Khodiyar V.K."/>
            <person name="LaButti K."/>
            <person name="Laird G."/>
            <person name="Lehoczky J."/>
            <person name="Liu X."/>
            <person name="Lokyitsang T."/>
            <person name="Loveland J."/>
            <person name="Lui A."/>
            <person name="Macdonald P."/>
            <person name="Major J.E."/>
            <person name="Matthews L."/>
            <person name="Mauceli E."/>
            <person name="McCarroll S.A."/>
            <person name="Mihalev A.H."/>
            <person name="Mudge J."/>
            <person name="Nguyen C."/>
            <person name="Nicol R."/>
            <person name="O'Leary S.B."/>
            <person name="Osoegawa K."/>
            <person name="Schwartz D.C."/>
            <person name="Shaw-Smith C."/>
            <person name="Stankiewicz P."/>
            <person name="Steward C."/>
            <person name="Swarbreck D."/>
            <person name="Venkataraman V."/>
            <person name="Whittaker C.A."/>
            <person name="Yang X."/>
            <person name="Zimmer A.R."/>
            <person name="Bradley A."/>
            <person name="Hubbard T."/>
            <person name="Birren B.W."/>
            <person name="Rogers J."/>
            <person name="Lander E.S."/>
            <person name="Nusbaum C."/>
        </authorList>
    </citation>
    <scope>NUCLEOTIDE SEQUENCE [LARGE SCALE GENOMIC DNA]</scope>
</reference>
<reference key="6">
    <citation type="journal article" date="2004" name="Genome Res.">
        <title>The status, quality, and expansion of the NIH full-length cDNA project: the Mammalian Gene Collection (MGC).</title>
        <authorList>
            <consortium name="The MGC Project Team"/>
        </authorList>
    </citation>
    <scope>NUCLEOTIDE SEQUENCE [LARGE SCALE MRNA] (ISOFORM 1)</scope>
    <source>
        <tissue>Lung</tissue>
    </source>
</reference>
<reference key="7">
    <citation type="journal article" date="1988" name="Biochem. Biophys. Res. Commun.">
        <title>Isolation of the human platelet glycoprotein IIb gene and characterization of the 5' flanking region.</title>
        <authorList>
            <person name="Prandini M.H."/>
            <person name="Denarier E."/>
            <person name="Frachet P."/>
            <person name="Uzan G."/>
            <person name="Marguerie G."/>
        </authorList>
    </citation>
    <scope>NUCLEOTIDE SEQUENCE [GENOMIC DNA] OF 1-62 AND 1021-1039</scope>
</reference>
<reference key="8">
    <citation type="journal article" date="1986" name="Proc. Natl. Acad. Sci. U.S.A.">
        <title>Platelet glycoproteins IIb and IIIa: evidence for a family of immunologically and structurally related glycoproteins in mammalian cells.</title>
        <authorList>
            <person name="Charo I.F."/>
            <person name="Fitzgerald L.A."/>
            <person name="Steiner B."/>
            <person name="Rall S.C."/>
            <person name="Bekeart L.S."/>
            <person name="Phillips D.R."/>
        </authorList>
    </citation>
    <scope>PROTEIN SEQUENCE OF 32-56 AND 903-917</scope>
</reference>
<reference key="9">
    <citation type="journal article" date="1991" name="Biochem. J.">
        <title>Separation of important new platelet glycoproteins (GPIa, GPIc, GPIc*, GPIIa and GMP-140) by F.P.L.C. Characterization by monoclonal antibodies and gas-phase sequencing.</title>
        <authorList>
            <person name="Catimel B."/>
            <person name="Parmentier S."/>
            <person name="Leung L.L."/>
            <person name="McGregor J.L."/>
        </authorList>
    </citation>
    <scope>PROTEIN SEQUENCE OF 32-42</scope>
</reference>
<reference key="10">
    <citation type="journal article" date="1996" name="Eur. J. Biochem.">
        <title>Thermal stability of individual domains in platelet glycoprotein IIbIIIa.</title>
        <authorList>
            <person name="Makogonenko E.M."/>
            <person name="Yakubenko V.P."/>
            <person name="Ingham K.C."/>
            <person name="Medved L.V."/>
        </authorList>
    </citation>
    <scope>PROTEIN SEQUENCE OF 32 AND 872</scope>
</reference>
<reference key="11">
    <citation type="journal article" date="1988" name="Eur. J. Biochem.">
        <title>cDNA clones for human platelet GPIIb corresponding to mRNA from megakaryocytes and HEL cells. Evidence for an extensive homology to other Arg-Gly-Asp adhesion receptors.</title>
        <authorList>
            <person name="Uzan G."/>
            <person name="Frachet P."/>
            <person name="Lajmanovich A."/>
            <person name="Prandini M.-H."/>
            <person name="Denarier E."/>
            <person name="Duperray A."/>
            <person name="Loftus J."/>
            <person name="Ginsberg M."/>
            <person name="Plow E."/>
            <person name="Marguerie G."/>
        </authorList>
    </citation>
    <scope>NUCLEOTIDE SEQUENCE [MRNA] OF 392-1039 (ISOFORM 1)</scope>
</reference>
<reference key="12">
    <citation type="journal article" date="1987" name="Blood">
        <title>Purification and partial amino acid sequence of human platelet membrane glycoproteins IIb and IIIa.</title>
        <authorList>
            <person name="Hiraiwa A."/>
            <person name="Matsukage A."/>
            <person name="Shiku H."/>
            <person name="Takahashi T."/>
            <person name="Naito K."/>
            <person name="Yamada K."/>
        </authorList>
    </citation>
    <scope>PROTEIN SEQUENCE OF 487-501 AND 1026-1038</scope>
</reference>
<reference key="13">
    <citation type="journal article" date="1998" name="Cancer Res.">
        <title>Identification of a novel truncated alphaIIb integrin.</title>
        <authorList>
            <person name="Trikha M."/>
            <person name="Cai Y."/>
            <person name="Grignon D."/>
            <person name="Honn K.V."/>
        </authorList>
    </citation>
    <scope>NUCLEOTIDE SEQUENCE [MRNA] OF 753-1039 (ISOFORM 3)</scope>
    <scope>TISSUE SPECIFICITY</scope>
</reference>
<reference key="14">
    <citation type="journal article" date="1987" name="J. Clin. Invest.">
        <title>Platelet glycoprotein IIb. Chromosomal localization and tissue expression.</title>
        <authorList>
            <person name="Bray P.F."/>
            <person name="Rosa J.P."/>
            <person name="Johnston G.I."/>
            <person name="Shiu D.T."/>
            <person name="Cook R.G."/>
            <person name="Lau C."/>
            <person name="Kan Y.W."/>
            <person name="McEver R.P."/>
            <person name="Shuman M.A."/>
        </authorList>
    </citation>
    <scope>NUCLEOTIDE SEQUENCE [MRNA] OF 868-1039 (ISOFORM 1)</scope>
</reference>
<reference key="15">
    <citation type="journal article" date="1989" name="Biochem. J.">
        <title>Interchain and intrachain disulphide bonds in human platelet glycoprotein IIb. Localization of the epitopes for several monoclonal antibodies.</title>
        <authorList>
            <person name="Calvete J.J."/>
            <person name="Alvarez M.V."/>
            <person name="Rivas G."/>
            <person name="Hew C.L."/>
            <person name="Henschen A."/>
            <person name="Gonzalez-Rodriguez J."/>
        </authorList>
    </citation>
    <scope>PROTEIN SEQUENCE OF 903-922 AND 934-939</scope>
</reference>
<reference key="16">
    <citation type="journal article" date="1990" name="J. Biol. Chem.">
        <title>Human platelets and megakaryocytes contain alternately spliced glycoprotein IIb mRNAs.</title>
        <authorList>
            <person name="Bray P.F."/>
            <person name="Leung C.S.-I."/>
            <person name="Shuman M.A."/>
        </authorList>
    </citation>
    <scope>NUCLEOTIDE SEQUENCE [GENOMIC DNA] OF 938-997 (ISOFORMS 1 AND 2)</scope>
    <scope>TISSUE SPECIFICITY</scope>
    <source>
        <tissue>Erythroleukemia</tissue>
    </source>
</reference>
<reference key="17">
    <citation type="journal article" date="1989" name="Biochem. J.">
        <title>Complete localization of the intrachain disulphide bonds and the N-glycosylation points in the alpha-subunit of human platelet glycoprotein IIb.</title>
        <authorList>
            <person name="Calvete J.J."/>
            <person name="Henschen A."/>
            <person name="Gonzalez-Rodriguez J."/>
        </authorList>
    </citation>
    <scope>PARTIAL PROTEIN SEQUENCE</scope>
    <scope>DISULFIDE BONDS</scope>
    <scope>GLYCOSYLATION AT ASN-46; ASN-280; ASN-601 AND ASN-711</scope>
</reference>
<reference key="18">
    <citation type="journal article" date="1993" name="FEBS Lett.">
        <title>Localization of an O-glycosylation site in the alpha-subunit of the human platelet integrin GPIIb/IIIa involved in Baka (HPA-3a) alloantigen expression.</title>
        <authorList>
            <person name="Calvete J.J."/>
            <person name="Muniz-Diaz E."/>
        </authorList>
    </citation>
    <scope>PARTIAL PROTEIN SEQUENCE</scope>
    <scope>GLYCOSYLATION AT SER-878</scope>
</reference>
<reference key="19">
    <citation type="journal article" date="1990" name="FEBS Lett.">
        <title>Characterization of the beta-chain N-terminus heterogeneity and the alpha-chain C-terminus of human platelet GPIIb. Posttranslational cleavage sites.</title>
        <authorList>
            <person name="Calvete J.J."/>
            <person name="Schafer W."/>
            <person name="Henschen A."/>
            <person name="Gonzalez-Rodriguez J."/>
        </authorList>
    </citation>
    <scope>PROTEOLYTIC CLEAVAGE</scope>
    <scope>PYROGLUTAMATE FORMATION AT GLN-891</scope>
</reference>
<reference key="20">
    <citation type="journal article" date="1997" name="J. Biol. Chem.">
        <title>Identification of a novel calcium-binding protein that interacts with the integrin alphaIIb cytoplasmic domain.</title>
        <authorList>
            <person name="Naik U.P."/>
            <person name="Patel P.M."/>
            <person name="Parise L.V."/>
        </authorList>
    </citation>
    <scope>INTERACTION WITH CIB1</scope>
    <source>
        <tissue>Fetal liver</tissue>
    </source>
</reference>
<reference key="21">
    <citation type="journal article" date="1997" name="J. Biol. Chem.">
        <title>Human neutrophil elastase proteolytically activates the platelet integrin alphaIIbbeta3 through cleavage of the carboxyl terminus of the alphaIIb subunit heavy chain. Involvement in the potentiation of platelet aggregation.</title>
        <authorList>
            <person name="Si-Tahar M."/>
            <person name="Pidard D."/>
            <person name="Balloy V."/>
            <person name="Moniatte M."/>
            <person name="Kieffer N."/>
            <person name="Van Dorsselaer A."/>
            <person name="Chignard M."/>
        </authorList>
    </citation>
    <scope>FUNCTION</scope>
    <scope>PROTEOLYTIC CLEAVAGE BY ELANE</scope>
</reference>
<reference key="22">
    <citation type="journal article" date="1999" name="Biochem. J.">
        <title>Calcium-dependent properties of CIB binding to the integrin alphaIIb cytoplasmic domain and translocation to the platelet cytoskeleton.</title>
        <authorList>
            <person name="Shock D.D."/>
            <person name="Naik U.P."/>
            <person name="Brittain J.E."/>
            <person name="Alahari S.K."/>
            <person name="Sondek J."/>
            <person name="Parise L.V."/>
        </authorList>
    </citation>
    <scope>INTERACTION WITH CIB1</scope>
</reference>
<reference key="23">
    <citation type="journal article" date="1999" name="J. Biol. Chem.">
        <title>Bidirectional transmembrane modulation of integrin alphaIIbbeta3 conformations.</title>
        <authorList>
            <person name="Leisner T.M."/>
            <person name="Wencel-Drake J.D."/>
            <person name="Wang W."/>
            <person name="Lam S.C."/>
        </authorList>
    </citation>
    <scope>MUTAGENESIS OF 1029-PRO-PRO-1030</scope>
</reference>
<reference key="24">
    <citation type="journal article" date="2005" name="J. Proteome Res.">
        <title>Human plasma N-glycoproteome analysis by immunoaffinity subtraction, hydrazide chemistry, and mass spectrometry.</title>
        <authorList>
            <person name="Liu T."/>
            <person name="Qian W.-J."/>
            <person name="Gritsenko M.A."/>
            <person name="Camp D.G. II"/>
            <person name="Monroe M.E."/>
            <person name="Moore R.J."/>
            <person name="Smith R.D."/>
        </authorList>
    </citation>
    <scope>GLYCOSYLATION [LARGE SCALE ANALYSIS] AT ASN-601</scope>
    <source>
        <tissue>Plasma</tissue>
    </source>
</reference>
<reference key="25">
    <citation type="journal article" date="2008" name="Biochem. Biophys. Res. Commun.">
        <title>RN181, a novel ubiquitin E3 ligase that interacts with the KVGFFKR motif of platelet integrin alpha(IIb)beta3.</title>
        <authorList>
            <person name="Brophy T.M."/>
            <person name="Raab M."/>
            <person name="Daxecker H."/>
            <person name="Culligan K.G."/>
            <person name="Lehmann I."/>
            <person name="Chubb A.J."/>
            <person name="Treumann A."/>
            <person name="Moran N."/>
        </authorList>
    </citation>
    <scope>INTERACTION WITH RNF181</scope>
</reference>
<reference key="26">
    <citation type="journal article" date="2011" name="J. Biol. Chem.">
        <title>Solution structures of Ca2+-CIB1 and Mg2+-CIB1 and their interactions with the platelet integrin alphaIIb cytoplasmic domain.</title>
        <authorList>
            <person name="Huang H."/>
            <person name="Ishida H."/>
            <person name="Yamniuk A.P."/>
            <person name="Vogel H.J."/>
        </authorList>
    </citation>
    <scope>INTERACTION WITH CIB1</scope>
</reference>
<reference key="27">
    <citation type="journal article" date="2012" name="Biochem. Cell Biol.">
        <title>Biophysical and structural studies of the human calcium- and integrin-binding protein family: understanding their functional similarities and differences.</title>
        <authorList>
            <person name="Huang H."/>
            <person name="Bogstie J.N."/>
            <person name="Vogel H.J."/>
        </authorList>
    </citation>
    <scope>INTERACTION WITH CIB1; CIB2; CIB3 AND CIB4</scope>
</reference>
<reference key="28">
    <citation type="journal article" date="2012" name="J. Am. Chem. Soc.">
        <title>Structural basis for the activation of platelet integrin alphaIIbbeta3 by calcium- and integrin-binding protein 1.</title>
        <authorList>
            <person name="Huang H."/>
            <person name="Vogel H.J."/>
        </authorList>
    </citation>
    <scope>INTERACTION WITH CIB1</scope>
</reference>
<reference key="29">
    <citation type="journal article" date="2023" name="Life. Sci Alliance">
        <title>The C-type lectin domain of CD62P (P-selectin) functions as an integrin ligand.</title>
        <authorList>
            <person name="Takada Y.K."/>
            <person name="Simon S.I."/>
            <person name="Takada Y."/>
        </authorList>
    </citation>
    <scope>INTERACTION WITH SELP</scope>
</reference>
<reference evidence="53" key="30">
    <citation type="journal article" date="2004" name="Nature">
        <title>Structural basis for allostery in integrins and binding to fibrinogen-mimetic therapeutics.</title>
        <authorList>
            <person name="Xiao T."/>
            <person name="Takagi J."/>
            <person name="Coller B.S."/>
            <person name="Wang J.H."/>
            <person name="Springer T.A."/>
        </authorList>
    </citation>
    <scope>X-RAY CRYSTALLOGRAPHY (2.90 ANGSTROMS) OF 32-483 IN COMPLEX WITH ITGB3 AND CALCIUM</scope>
    <scope>GLYCOSYLATION AT ASN-46</scope>
    <scope>DISULFIDE BONDS</scope>
</reference>
<reference evidence="54 55" key="31">
    <citation type="journal article" date="2008" name="Mol. Cell">
        <title>Structure of a complete integrin ectodomain in a physiologic resting state and activation and deactivation by applied forces.</title>
        <authorList>
            <person name="Zhu J."/>
            <person name="Luo B.H."/>
            <person name="Xiao T."/>
            <person name="Zhang C."/>
            <person name="Nishida N."/>
            <person name="Springer T.A."/>
        </authorList>
    </citation>
    <scope>X-RAY CRYSTALLOGRAPHY (2.55 ANGSTROMS) OF 32-989 IN COMPLEX WITH ITGB3 AND CALCIUM</scope>
    <scope>GLYCOSYLATION AT ASN-46; ASN-280 AND ASN-601</scope>
    <scope>DISULFIDE BONDS</scope>
</reference>
<reference key="32">
    <citation type="journal article" date="1994" name="Thromb. Haemost.">
        <title>Inherited diseases of platelet glycoproteins: considerations for rapid molecular characterization.</title>
        <authorList>
            <person name="Bray P.F."/>
        </authorList>
    </citation>
    <scope>REVIEW ON GT1 VARIANTS</scope>
</reference>
<reference key="33">
    <citation type="journal article" date="1990" name="Blood">
        <title>Polymorphism of human platelet membrane glycoprotein IIb associated with the Baka/Bakb alloantigen system.</title>
        <authorList>
            <person name="Lyman S."/>
            <person name="Aster R.H."/>
            <person name="Visentin G.P."/>
            <person name="Newman P.J."/>
        </authorList>
    </citation>
    <scope>VARIANT SER-874</scope>
    <scope>POLYMORPHISM</scope>
</reference>
<reference key="34">
    <citation type="journal article" date="1994" name="J. Clin. Invest.">
        <title>Glanzmann thrombasthenia secondary to a Gly273--&gt;Asp mutation adjacent to the first calcium-binding domain of platelet glycoprotein IIb.</title>
        <authorList>
            <person name="Poncz M."/>
            <person name="Rifat S."/>
            <person name="Coller B.S."/>
            <person name="Newman P.J."/>
            <person name="Shattil S.J."/>
            <person name="Parrella T."/>
            <person name="Fortina P."/>
            <person name="Bennett J.S."/>
        </authorList>
    </citation>
    <scope>VARIANT GT1 ASP-273</scope>
</reference>
<reference key="35">
    <citation type="journal article" date="1994" name="J. Biol. Chem.">
        <title>A single amino acid substitution flanking the fourth calcium binding domain of alpha IIb prevents maturation of the alpha IIb beta 3 integrin complex.</title>
        <authorList>
            <person name="Wilcox D.A."/>
            <person name="Wautier J.-L."/>
            <person name="Pidard D."/>
            <person name="Newman P.J."/>
        </authorList>
    </citation>
    <scope>VARIANT GT1 ASP-449</scope>
</reference>
<reference key="36">
    <citation type="journal article" date="1995" name="J. Clin. Invest.">
        <title>Glanzmann thrombasthenia resulting from a single amino acid substitution between the second and third calcium-binding domains of GPIIb. Role of the GPIIb amino terminus in integrin subunit association.</title>
        <authorList>
            <person name="Wilcox D.A."/>
            <person name="Paddock C.M."/>
            <person name="Lyman S."/>
            <person name="Gill J.C."/>
            <person name="Newman P.J."/>
        </authorList>
    </citation>
    <scope>VARIANT GT1 HIS-358</scope>
</reference>
<reference key="37">
    <citation type="journal article" date="1996" name="Blood">
        <title>Glanzmann thrombasthenia due to a two amino acid deletion in the fourth calcium-binding domain of alpha IIb: demonstration of the importance of calcium-binding domains in the conformation of alpha IIb beta 3.</title>
        <authorList>
            <person name="Basani R.B."/>
            <person name="Vilaire G."/>
            <person name="Shattil S.J."/>
            <person name="Kolodziej M.A."/>
            <person name="Bennett J.S."/>
            <person name="Poncz M."/>
        </authorList>
    </citation>
    <scope>VARIANT GT1 456-VAL-ASP-457 DEL</scope>
    <scope>CHARACTERIZATION OF VARIANT GT1 456-VAL-ASP-457 DEL</scope>
</reference>
<reference key="38">
    <citation type="journal article" date="1997" name="Blood Cells Mol. Dis.">
        <title>Hematologically important mutations: Glanzmann thrombasthenia.</title>
        <authorList>
            <person name="French D.L."/>
            <person name="Coller B.S."/>
        </authorList>
    </citation>
    <scope>VARIANTS GT1 ILE-207; THR-596 AND GLN-1026</scope>
</reference>
<reference key="39">
    <citation type="journal article" date="1998" name="Blood">
        <title>Glycoprotein IIb Leu214Pro mutation produces Glanzmann thrombasthenia with both quantitative and qualitative abnormalities in GPIIb/IIIa.</title>
        <authorList>
            <person name="Grimaldi C.M."/>
            <person name="Chen F."/>
            <person name="Wu C."/>
            <person name="Weiss H.J."/>
            <person name="Coller B.S."/>
            <person name="French D.L."/>
        </authorList>
    </citation>
    <scope>VARIANT GT1 PRO-214</scope>
    <scope>CHARACTERIZATION OF VARIANT GT1 PRO-214</scope>
</reference>
<reference key="40">
    <citation type="journal article" date="1998" name="Blood">
        <title>A Gln747--&gt;Pro substitution in the IIb subunit is responsible for a moderate IIbbeta3 deficiency in Glanzmann thrombasthenia.</title>
        <authorList>
            <person name="Tadokoro S."/>
            <person name="Tomiyama Y."/>
            <person name="Honda S."/>
            <person name="Arai M."/>
            <person name="Yamamoto N."/>
            <person name="Shiraga M."/>
            <person name="Kosugi S."/>
            <person name="Kanakura Y."/>
            <person name="Kurata Y."/>
            <person name="Matsuzawa Y."/>
        </authorList>
    </citation>
    <scope>VARIANT GT1 PRO-778</scope>
</reference>
<reference key="41">
    <citation type="journal article" date="1998" name="Blood">
        <title>R to Q amino acid substitution in the GFFKR sequence of the cytoplasmic domain of the integrin IIb subunit in a patient with a Glanzmann's thrombasthenia-like syndrome.</title>
        <authorList>
            <person name="Peyruchaud O."/>
            <person name="Nurden A.T."/>
            <person name="Milet S."/>
            <person name="Macchi L."/>
            <person name="Pannochia A."/>
            <person name="Bray P.F."/>
            <person name="Kieffer N."/>
            <person name="Bourre F."/>
        </authorList>
    </citation>
    <scope>VARIANT BDPLT16 GLN-1026</scope>
    <scope>CHARACTERIZATION OF VARIANT BDPLT16 GLN-1026</scope>
</reference>
<reference key="42">
    <citation type="journal article" date="1998" name="Br. J. Haematol.">
        <title>Novel point mutations in the alphaIIb subunit (Phe289--&gt;Ser, Glu324--&gt;Lys and Gln747--&gt;Pro) causing thrombasthenic phenotypes in four Japanese patients.</title>
        <authorList>
            <person name="Ambo H."/>
            <person name="Kamata T."/>
            <person name="Handa M."/>
            <person name="Kawai Y."/>
            <person name="Oda A."/>
            <person name="Murata M."/>
            <person name="Takada Y."/>
            <person name="Ikeda Y."/>
        </authorList>
    </citation>
    <scope>VARIANTS GT1 SER-320; LYS-355 AND PRO-778</scope>
</reference>
<reference key="43">
    <citation type="journal article" date="1998" name="Br. J. Haematol.">
        <title>Double heterozygosity of the GPIIb gene in a Swiss patient with Glanzmann's thrombasthenia.</title>
        <authorList>
            <person name="Ruan J."/>
            <person name="Peyruchaud O."/>
            <person name="Alberio L."/>
            <person name="Valles G."/>
            <person name="Clemetson K."/>
            <person name="Bourre F."/>
            <person name="Nurden A.T."/>
        </authorList>
    </citation>
    <scope>VARIANTS GT1 LYS-355 AND THR-596</scope>
</reference>
<reference key="44">
    <citation type="journal article" date="1999" name="Nat. Genet.">
        <title>Characterization of single-nucleotide polymorphisms in coding regions of human genes.</title>
        <authorList>
            <person name="Cargill M."/>
            <person name="Altshuler D."/>
            <person name="Ireland J."/>
            <person name="Sklar P."/>
            <person name="Ardlie K."/>
            <person name="Patil N."/>
            <person name="Shaw N."/>
            <person name="Lane C.R."/>
            <person name="Lim E.P."/>
            <person name="Kalyanaraman N."/>
            <person name="Nemesh J."/>
            <person name="Ziaugra L."/>
            <person name="Friedland L."/>
            <person name="Rolfe A."/>
            <person name="Warrington J."/>
            <person name="Lipshutz R."/>
            <person name="Daley G.Q."/>
            <person name="Lander E.S."/>
        </authorList>
    </citation>
    <scope>VARIANTS ILE-40; SER-874 AND ASN-968</scope>
    <scope>POLYMORPHISM</scope>
</reference>
<reference key="45">
    <citation type="journal article" date="1999" name="Blood">
        <title>Molecular genetic analysis of a compound heterozygote for the glycoprotein (GP) IIb gene associated with Glanzmann's thrombasthenia: disruption of the 674-687 disulfide bridge in GPIIb prevents surface exposure of GPIIb-IIIa complexes.</title>
        <authorList>
            <person name="Gonzalez-Manchon C."/>
            <person name="Fernandez-Pinel M."/>
            <person name="Arias-Salgado E.G."/>
            <person name="Ferrer M."/>
            <person name="Alvarez M.-V."/>
            <person name="Garcia-Munoz S."/>
            <person name="Ayuso M.S."/>
            <person name="Parrilla R."/>
        </authorList>
    </citation>
    <scope>VARIANT GT1 ARG-705</scope>
    <scope>CHARACTERIZATION OF VARIANT GT1 ARG-705</scope>
</reference>
<reference key="46">
    <citation type="journal article" date="1999" name="Nat. Genet.">
        <authorList>
            <person name="Cargill M."/>
            <person name="Altshuler D."/>
            <person name="Ireland J."/>
            <person name="Sklar P."/>
            <person name="Ardlie K."/>
            <person name="Patil N."/>
            <person name="Shaw N."/>
            <person name="Lane C.R."/>
            <person name="Lim E.P."/>
            <person name="Kalyanaraman N."/>
            <person name="Nemesh J."/>
            <person name="Ziaugra L."/>
            <person name="Friedland L."/>
            <person name="Rolfe A."/>
            <person name="Warrington J."/>
            <person name="Lipshutz R."/>
            <person name="Daley G.Q."/>
            <person name="Lander E.S."/>
        </authorList>
    </citation>
    <scope>ERRATUM OF PUBMED:9920835</scope>
</reference>
<reference key="47">
    <citation type="journal article" date="2000" name="Blood">
        <title>A naturally occurring mutation near the amino terminus of alphaIIb defines a new region involved in ligand binding to alphaIIbbeta3.</title>
        <authorList>
            <person name="Basani R.B."/>
            <person name="French D.L."/>
            <person name="Vilaire G."/>
            <person name="Brown D.L."/>
            <person name="Chen F."/>
            <person name="Coller B.S."/>
            <person name="Derrick J.M."/>
            <person name="Gartner T.K."/>
            <person name="Bennett J.S."/>
            <person name="Poncz M."/>
        </authorList>
    </citation>
    <scope>VARIANTS GT1 ALA-176 AND LEU-176</scope>
</reference>
<reference key="48">
    <citation type="journal article" date="2001" name="Platelets">
        <title>Description of 10 new mutations in platelet glycoprotein IIb (alphaIIb) and glycoprotein IIIa (beta3) genes.</title>
        <authorList>
            <person name="Vinciguerra C."/>
            <person name="Bordet J.C."/>
            <person name="Beaune G."/>
            <person name="Grenier C."/>
            <person name="Dechavanne M."/>
            <person name="Negrier C."/>
        </authorList>
    </citation>
    <scope>VARIANTS GT1 TRP-161; LEU-222; ARG-412 AND PRO-847</scope>
</reference>
<reference key="49">
    <citation type="journal article" date="2002" name="Br. J. Haematol.">
        <title>A Leu55 to Pro substitution in the integrin alphaIIb is responsible for a case of Glanzmann's thrombasthenia.</title>
        <authorList>
            <person name="Tanaka S."/>
            <person name="Hayashi T."/>
            <person name="Hori Y."/>
            <person name="Terada C."/>
            <person name="Han K.S."/>
            <person name="Ahn H.S."/>
            <person name="Bourre F."/>
            <person name="Tani Y."/>
        </authorList>
    </citation>
    <scope>VARIANT GT1 PRO-86</scope>
    <scope>CHARACTERIZATION OF VARIANT GT1 PRO-86</scope>
</reference>
<reference key="50">
    <citation type="journal article" date="2002" name="Thromb. Haemost.">
        <title>Glanzmann's thrombasthenia: identification of 19 new mutations in 30 patients.</title>
        <authorList>
            <person name="D'Andrea G."/>
            <person name="Colaizzo D."/>
            <person name="Vecchione G."/>
            <person name="Grandone E."/>
            <person name="Di Minno G."/>
            <person name="Margaglione M."/>
        </authorList>
    </citation>
    <scope>VARIANTS GT1 VAL-139; ALA-176; GLU-267; ASP-380; THR-405; ASP-581; ARG-705; VAL-752 AND PRO-755</scope>
</reference>
<reference key="51">
    <citation type="journal article" date="2003" name="Blood">
        <title>Two novel mutations in the alpha IIb calcium-binding domains identify hydrophobic regions essential for alpha IIbbeta 3 biogenesis.</title>
        <authorList>
            <person name="Mitchell W.B."/>
            <person name="Li J.H."/>
            <person name="Singh F."/>
            <person name="Michelson A.D."/>
            <person name="Bussel J."/>
            <person name="Coller B.S."/>
            <person name="French D.L."/>
        </authorList>
    </citation>
    <scope>VARIANTS GT1 PHE-329 AND THR-405</scope>
    <scope>CHARACTERIZATION OF VARIANTS GT1 PHE-329 AND THR-405</scope>
</reference>
<reference key="52">
    <citation type="journal article" date="2003" name="Blood">
        <title>A naturally occurring Tyr143His alpha IIb mutation abolishes alpha IIb beta 3 function for soluble ligands but retains its ability for mediating cell adhesion and clot retraction: comparison with other mutations causing ligand-binding defects.</title>
        <authorList>
            <person name="Kiyoi T."/>
            <person name="Tomiyama Y."/>
            <person name="Honda S."/>
            <person name="Tadokoro S."/>
            <person name="Arai M."/>
            <person name="Kashiwagi H."/>
            <person name="Kosugi S."/>
            <person name="Kato H."/>
            <person name="Kurata Y."/>
            <person name="Matsuzawa Y."/>
        </authorList>
    </citation>
    <scope>VARIANT GT1 HIS-174</scope>
    <scope>CHARACTERIZATION OF VARIANT GT1 HIS-174</scope>
</reference>
<reference key="53">
    <citation type="journal article" date="2004" name="J. Thromb. Haemost.">
        <title>Triple heterozygosity in the integrin alphaIIb subunit in a patient with Glanzmann's thrombasthenia.</title>
        <authorList>
            <person name="Nurden A.T."/>
            <person name="Breillat C."/>
            <person name="Jacquelin B."/>
            <person name="Combrie R."/>
            <person name="Freedman J."/>
            <person name="Blanchette V.S."/>
            <person name="Schmugge M."/>
            <person name="Rand M.L."/>
        </authorList>
    </citation>
    <scope>VARIANT GT1 MET-982</scope>
    <scope>CHARACTERIZATION OF VARIANT GT1 MET-982</scope>
    <scope>VARIANT THR-989</scope>
</reference>
<reference key="54">
    <citation type="journal article" date="2004" name="J. Thromb. Haemost.">
        <title>A novel Phe171Cys mutation in integrin alpha causes Glanzmann thrombasthenia by abrogating alphaIIbbeta3 complex formation.</title>
        <authorList>
            <person name="Rosenberg N."/>
            <person name="Landau M."/>
            <person name="Luboshitz J."/>
            <person name="Rechavi G."/>
            <person name="Seligsohn U."/>
        </authorList>
    </citation>
    <scope>VARIANT GT1 CYS-202</scope>
    <scope>CHARACTERIZATION OF VARIANT GT1 CYS-202</scope>
</reference>
<reference key="55">
    <citation type="journal article" date="2006" name="Haematologica">
        <title>Type II Glanzmann thrombasthenia in a compound heterozygote for the alpha IIb gene. A novel missense mutation in exon 27.</title>
        <authorList>
            <person name="Jayo A."/>
            <person name="Pabon D."/>
            <person name="Lastres P."/>
            <person name="Jimenez-Yuste V."/>
            <person name="Gonzalez-Manchon C."/>
        </authorList>
    </citation>
    <scope>VARIANT GT1 LEU-943</scope>
    <scope>CHARACTERIZATION OF VARIANT GT1 LEU-943</scope>
</reference>
<reference key="56">
    <citation type="journal article" date="2010" name="Hum. Mutat.">
        <title>AlphaIIbbeta3 integrin: new allelic variants in Glanzmann thrombasthenia, effects on ITGA2B and ITGB3 mRNA splicing, expression, and structure-function.</title>
        <authorList>
            <person name="Jallu V."/>
            <person name="Dusseaux M."/>
            <person name="Panzer S."/>
            <person name="Torchet M.F."/>
            <person name="Hezard N."/>
            <person name="Goudemand J."/>
            <person name="de Brevern A.G."/>
            <person name="Kaplan C."/>
        </authorList>
    </citation>
    <scope>VARIANTS GT1 THR-405; THR-596; ARG-705; PRO-778; PHE-934; LEU-957; MET-982 AND THR-989</scope>
    <scope>CHARACTERIZATION OF VARIANTS GT1 PHE-934 AND LEU-957</scope>
</reference>
<reference key="57">
    <citation type="journal article" date="2011" name="Blood">
        <title>Heterozygous ITGA2B R995W mutation inducing constitutive activation of the alphaIIbbeta3 receptor affects proplatelet formation and causes congenital macrothrombocytopenia.</title>
        <authorList>
            <person name="Kunishima S."/>
            <person name="Kashiwagi H."/>
            <person name="Otsu M."/>
            <person name="Takayama N."/>
            <person name="Eto K."/>
            <person name="Onodera M."/>
            <person name="Miyajima Y."/>
            <person name="Takamatsu Y."/>
            <person name="Suzumiya J."/>
            <person name="Matsubara K."/>
            <person name="Tomiyama Y."/>
            <person name="Saito H."/>
        </authorList>
    </citation>
    <scope>VARIANT BDPLT16 TRP-1026</scope>
    <scope>CHARACTERIZATION OF VARIANT BDPLT16 TRP-1026</scope>
</reference>
<comment type="function">
    <text evidence="1 42">Integrin alpha-IIb/beta-3 is a receptor for fibronectin, fibrinogen, plasminogen, prothrombin, thrombospondin and vitronectin. It recognizes the sequence R-G-D in a wide array of ligands. It recognizes the sequence H-H-L-G-G-G-A-K-Q-A-G-D-V in fibrinogen gamma chain (By similarity). Following activation integrin alpha-IIb/beta-3 brings about platelet/platelet interaction through binding of soluble fibrinogen (PubMed:9111081). This step leads to rapid platelet aggregation which physically plugs ruptured endothelial cell surface (By similarity).</text>
</comment>
<comment type="subunit">
    <text evidence="2 7 19 23 26 27 34 41">Heterodimer of an alpha and a beta subunit. The alpha subunit is composed of a heavy and a light chain linked by a disulfide bond. Alpha-IIb associates with beta-3. Directly interacts with RNF181. Interacts (via C-terminus cytoplasmic tail region) with CIB1; the interaction is direct and calcium-dependent. Interacts (via C-terminus cytoplasmic tail region) with CIB2, CIB3 and CIB4; the interactions are stabilized/increased in a calcium and magnesium-dependent manner. ITGA2B:ITGB3 interacts with PPIA/CYPA; the interaction is ROS and PPIase activity-dependent and is increased in the presence of thrombin (By similarity). ITGA2B:ITGB3 interacts with SELP (via C-type lectin domain); the interaction mediates cell-cell interaction and adhesion (PubMed:37184585).</text>
</comment>
<comment type="interaction">
    <interactant intactId="EBI-702693">
        <id>P08514</id>
    </interactant>
    <interactant intactId="EBI-702693">
        <id>P08514</id>
        <label>ITGA2B</label>
    </interactant>
    <organismsDiffer>false</organismsDiffer>
    <experiments>7</experiments>
</comment>
<comment type="interaction">
    <interactant intactId="EBI-702693">
        <id>P08514</id>
    </interactant>
    <interactant intactId="EBI-702847">
        <id>P05106</id>
        <label>ITGB3</label>
    </interactant>
    <organismsDiffer>false</organismsDiffer>
    <experiments>12</experiments>
</comment>
<comment type="interaction">
    <interactant intactId="EBI-15805658">
        <id>P08514-1</id>
    </interactant>
    <interactant intactId="EBI-350432">
        <id>P21333</id>
        <label>FLNA</label>
    </interactant>
    <organismsDiffer>false</organismsDiffer>
    <experiments>3</experiments>
</comment>
<comment type="interaction">
    <interactant intactId="EBI-15805658">
        <id>P08514-1</id>
    </interactant>
    <interactant intactId="EBI-702847">
        <id>P05106</id>
        <label>ITGB3</label>
    </interactant>
    <organismsDiffer>false</organismsDiffer>
    <experiments>4</experiments>
</comment>
<comment type="subcellular location">
    <subcellularLocation>
        <location>Membrane</location>
        <topology>Single-pass type I membrane protein</topology>
    </subcellularLocation>
</comment>
<comment type="alternative products">
    <event type="alternative splicing"/>
    <isoform>
        <id>P08514-1</id>
        <name>1</name>
        <sequence type="displayed"/>
    </isoform>
    <isoform>
        <id>P08514-2</id>
        <name>2</name>
        <sequence type="described" ref="VSP_002737"/>
    </isoform>
    <isoform>
        <id>P08514-3</id>
        <name>3</name>
        <name evidence="51">tr-alpha-IIb</name>
        <sequence type="described" ref="VSP_002736"/>
    </isoform>
</comment>
<comment type="tissue specificity">
    <text evidence="30 48">Isoform 1 and isoform 2 are expressed in platelets and megakaryocytes, but not in reticulocytes. Not detected in Jurkat, nor in U937 cell lines (PubMed:2351656). Isoform 3 is expressed in prostate adenocarcinoma, as well as in several erythroleukemia, prostate adenocarcinoma and melanoma cell lines, including PC-3, DU-145, HEL, WM983A, WM983B and WM35. Not detected in platelets, nor in normal prostate (at protein level) (PubMed:9809974).</text>
</comment>
<comment type="PTM">
    <molecule>Integrin alpha-IIb heavy chain</molecule>
    <text evidence="42">Cleaved by ELANE; the cleavage promotes activation of platelet fibrinogen receptor integrin alpha-IIb/beta-3.</text>
</comment>
<comment type="polymorphism">
    <text evidence="6 29">Position 874 is associated with platelet-specific alloantigen HPA-3/BAK/LEK. HPA-3A/BAK(A)/LEK(A) has Ile-874 and HPA-3B/BAK(B)/LEK(B) has Ser-874. HPA-3B is involved in neonatal alloimmune thrombocytopenia (NAIT or NATP).</text>
</comment>
<comment type="disease" evidence="8 9 10 11 12 13 14 15 18 22 35 37 38 40 43 44 45 46 47 50">
    <disease id="DI-01664">
        <name>Glanzmann thrombasthenia 1</name>
        <acronym>GT1</acronym>
        <description>A form of Glanzmann thrombasthenia, a disorder characterized by failure of platelet aggregation, absent or diminished clot retraction, and mucocutaneous bleeding of mild-to-moderate severity. Glanzmann thrombasthenia has been classified into clinical types I and II. In type I, platelets show absence of glycoprotein IIb-IIIa complexes at their surface and lack fibrinogen and clot retraction capability. In type II, the platelets express glycoprotein IIb-IIIa complexes at reduced levels, have detectable amounts of fibrinogen, and have low or moderate clot retraction capability. GT1 inheritance is autosomal recessive.</description>
        <dbReference type="MIM" id="273800"/>
    </disease>
    <text>The disease is caused by variants affecting the gene represented in this entry.</text>
</comment>
<comment type="disease" evidence="24 49">
    <disease id="DI-03752">
        <name>Bleeding disorder, platelet-type, 16</name>
        <acronym>BDPLT16</acronym>
        <description>An autosomal dominant form of congenital macrothrombocytopenia associated with platelet anisocytosis. It is a disorder of platelet production. Affected individuals may have no or only mildly increased bleeding tendency. In vitro studies show mild platelet functional abnormalities.</description>
        <dbReference type="MIM" id="187800"/>
    </disease>
    <text>The disease is caused by variants affecting the gene represented in this entry.</text>
</comment>
<comment type="similarity">
    <text evidence="52">Belongs to the integrin alpha chain family.</text>
</comment>
<dbReference type="EMBL" id="J02764">
    <property type="protein sequence ID" value="AAA60114.1"/>
    <property type="molecule type" value="mRNA"/>
</dbReference>
<dbReference type="EMBL" id="M34480">
    <property type="protein sequence ID" value="AAA35926.1"/>
    <property type="molecule type" value="mRNA"/>
</dbReference>
<dbReference type="EMBL" id="M34344">
    <property type="protein sequence ID" value="AAA53150.1"/>
    <property type="molecule type" value="Genomic_DNA"/>
</dbReference>
<dbReference type="EMBL" id="M33319">
    <property type="protein sequence ID" value="AAA53150.1"/>
    <property type="status" value="JOINED"/>
    <property type="molecule type" value="Genomic_DNA"/>
</dbReference>
<dbReference type="EMBL" id="M33320">
    <property type="protein sequence ID" value="AAA53150.1"/>
    <property type="status" value="JOINED"/>
    <property type="molecule type" value="Genomic_DNA"/>
</dbReference>
<dbReference type="EMBL" id="AK315335">
    <property type="protein sequence ID" value="BAG37735.1"/>
    <property type="molecule type" value="mRNA"/>
</dbReference>
<dbReference type="EMBL" id="AC003043">
    <property type="status" value="NOT_ANNOTATED_CDS"/>
    <property type="molecule type" value="Genomic_DNA"/>
</dbReference>
<dbReference type="EMBL" id="BC117443">
    <property type="protein sequence ID" value="AAI17444.1"/>
    <property type="molecule type" value="mRNA"/>
</dbReference>
<dbReference type="EMBL" id="BC126442">
    <property type="protein sequence ID" value="AAI26443.1"/>
    <property type="molecule type" value="mRNA"/>
</dbReference>
<dbReference type="EMBL" id="M22568">
    <property type="protein sequence ID" value="AAA52587.1"/>
    <property type="molecule type" value="Genomic_DNA"/>
</dbReference>
<dbReference type="EMBL" id="M22569">
    <property type="protein sequence ID" value="AAA52588.1"/>
    <property type="molecule type" value="Genomic_DNA"/>
</dbReference>
<dbReference type="EMBL" id="X06831">
    <property type="protein sequence ID" value="CAA29987.1"/>
    <property type="molecule type" value="mRNA"/>
</dbReference>
<dbReference type="EMBL" id="AF098114">
    <property type="protein sequence ID" value="AAC98507.1"/>
    <property type="molecule type" value="mRNA"/>
</dbReference>
<dbReference type="EMBL" id="M18085">
    <property type="protein sequence ID" value="AAA52597.1"/>
    <property type="molecule type" value="mRNA"/>
</dbReference>
<dbReference type="EMBL" id="M54799">
    <property type="protein sequence ID" value="AAA52599.1"/>
    <property type="molecule type" value="Genomic_DNA"/>
</dbReference>
<dbReference type="CCDS" id="CCDS32665.1">
    <molecule id="P08514-1"/>
</dbReference>
<dbReference type="PIR" id="A34269">
    <property type="entry name" value="A34269"/>
</dbReference>
<dbReference type="RefSeq" id="NP_000410.2">
    <molecule id="P08514-1"/>
    <property type="nucleotide sequence ID" value="NM_000419.5"/>
</dbReference>
<dbReference type="RefSeq" id="XP_011523051.1">
    <property type="nucleotide sequence ID" value="XM_011524749.1"/>
</dbReference>
<dbReference type="PDB" id="1DPK">
    <property type="method" value="NMR"/>
    <property type="chains" value="A=1020-1039"/>
</dbReference>
<dbReference type="PDB" id="1DPQ">
    <property type="method" value="NMR"/>
    <property type="chains" value="A=1020-1039"/>
</dbReference>
<dbReference type="PDB" id="1KUP">
    <property type="method" value="NMR"/>
    <property type="chains" value="A=1018-1028"/>
</dbReference>
<dbReference type="PDB" id="1KUZ">
    <property type="method" value="NMR"/>
    <property type="chains" value="A=1018-1028"/>
</dbReference>
<dbReference type="PDB" id="1M8O">
    <property type="method" value="NMR"/>
    <property type="chains" value="A=1020-1039"/>
</dbReference>
<dbReference type="PDB" id="1S4W">
    <property type="method" value="NMR"/>
    <property type="chains" value="A=1020-1039"/>
</dbReference>
<dbReference type="PDB" id="1TYE">
    <property type="method" value="X-ray"/>
    <property type="resolution" value="2.90 A"/>
    <property type="chains" value="A/C/E=32-483"/>
</dbReference>
<dbReference type="PDB" id="2K1A">
    <property type="method" value="NMR"/>
    <property type="chains" value="A=989-1029"/>
</dbReference>
<dbReference type="PDB" id="2K9J">
    <property type="method" value="NMR"/>
    <property type="chains" value="A=989-1029"/>
</dbReference>
<dbReference type="PDB" id="2KNC">
    <property type="method" value="NMR"/>
    <property type="chains" value="A=991-1039"/>
</dbReference>
<dbReference type="PDB" id="2MTP">
    <property type="method" value="NMR"/>
    <property type="chains" value="B=1019-1039"/>
</dbReference>
<dbReference type="PDB" id="2N9Y">
    <property type="method" value="NMR"/>
    <property type="chains" value="A=989-1029"/>
</dbReference>
<dbReference type="PDB" id="2VC2">
    <property type="method" value="X-ray"/>
    <property type="resolution" value="3.10 A"/>
    <property type="chains" value="A=32-483"/>
</dbReference>
<dbReference type="PDB" id="2VDK">
    <property type="method" value="X-ray"/>
    <property type="resolution" value="2.80 A"/>
    <property type="chains" value="A=32-483"/>
</dbReference>
<dbReference type="PDB" id="2VDL">
    <property type="method" value="X-ray"/>
    <property type="resolution" value="2.75 A"/>
    <property type="chains" value="A=32-483"/>
</dbReference>
<dbReference type="PDB" id="2VDM">
    <property type="method" value="X-ray"/>
    <property type="resolution" value="2.90 A"/>
    <property type="chains" value="A=32-483"/>
</dbReference>
<dbReference type="PDB" id="2VDN">
    <property type="method" value="X-ray"/>
    <property type="resolution" value="2.90 A"/>
    <property type="chains" value="A=32-483"/>
</dbReference>
<dbReference type="PDB" id="2VDO">
    <property type="method" value="X-ray"/>
    <property type="resolution" value="2.51 A"/>
    <property type="chains" value="A=32-483"/>
</dbReference>
<dbReference type="PDB" id="2VDP">
    <property type="method" value="X-ray"/>
    <property type="resolution" value="2.80 A"/>
    <property type="chains" value="A=32-483"/>
</dbReference>
<dbReference type="PDB" id="2VDQ">
    <property type="method" value="X-ray"/>
    <property type="resolution" value="2.59 A"/>
    <property type="chains" value="A=32-483"/>
</dbReference>
<dbReference type="PDB" id="2VDR">
    <property type="method" value="X-ray"/>
    <property type="resolution" value="2.40 A"/>
    <property type="chains" value="A=32-483"/>
</dbReference>
<dbReference type="PDB" id="3FCS">
    <property type="method" value="X-ray"/>
    <property type="resolution" value="2.55 A"/>
    <property type="chains" value="A/C=32-989"/>
</dbReference>
<dbReference type="PDB" id="3FCU">
    <property type="method" value="X-ray"/>
    <property type="resolution" value="2.90 A"/>
    <property type="chains" value="A/C/E=32-488"/>
</dbReference>
<dbReference type="PDB" id="3NID">
    <property type="method" value="X-ray"/>
    <property type="resolution" value="2.30 A"/>
    <property type="chains" value="A/C=32-488"/>
</dbReference>
<dbReference type="PDB" id="3NIF">
    <property type="method" value="X-ray"/>
    <property type="resolution" value="2.40 A"/>
    <property type="chains" value="A/C=32-488"/>
</dbReference>
<dbReference type="PDB" id="3NIG">
    <property type="method" value="X-ray"/>
    <property type="resolution" value="2.25 A"/>
    <property type="chains" value="A/C=32-488"/>
</dbReference>
<dbReference type="PDB" id="3T3M">
    <property type="method" value="X-ray"/>
    <property type="resolution" value="2.60 A"/>
    <property type="chains" value="A/C=32-488"/>
</dbReference>
<dbReference type="PDB" id="3T3P">
    <property type="method" value="X-ray"/>
    <property type="resolution" value="2.20 A"/>
    <property type="chains" value="A/C=32-488"/>
</dbReference>
<dbReference type="PDB" id="3ZDX">
    <property type="method" value="X-ray"/>
    <property type="resolution" value="2.45 A"/>
    <property type="chains" value="A/C=32-488"/>
</dbReference>
<dbReference type="PDB" id="3ZDY">
    <property type="method" value="X-ray"/>
    <property type="resolution" value="2.45 A"/>
    <property type="chains" value="A/C=32-488"/>
</dbReference>
<dbReference type="PDB" id="3ZDZ">
    <property type="method" value="X-ray"/>
    <property type="resolution" value="2.75 A"/>
    <property type="chains" value="A/C=32-488"/>
</dbReference>
<dbReference type="PDB" id="3ZE0">
    <property type="method" value="X-ray"/>
    <property type="resolution" value="2.95 A"/>
    <property type="chains" value="A/C=32-488"/>
</dbReference>
<dbReference type="PDB" id="3ZE1">
    <property type="method" value="X-ray"/>
    <property type="resolution" value="3.00 A"/>
    <property type="chains" value="A/C=32-488"/>
</dbReference>
<dbReference type="PDB" id="3ZE2">
    <property type="method" value="X-ray"/>
    <property type="resolution" value="2.35 A"/>
    <property type="chains" value="A/C=32-488"/>
</dbReference>
<dbReference type="PDB" id="4CAK">
    <property type="method" value="EM"/>
    <property type="resolution" value="20.50 A"/>
    <property type="chains" value="A=32-989"/>
</dbReference>
<dbReference type="PDB" id="4Z7N">
    <property type="method" value="X-ray"/>
    <property type="resolution" value="2.60 A"/>
    <property type="chains" value="A/C=32-486"/>
</dbReference>
<dbReference type="PDB" id="4Z7O">
    <property type="method" value="X-ray"/>
    <property type="resolution" value="2.85 A"/>
    <property type="chains" value="A/C=32-486"/>
</dbReference>
<dbReference type="PDB" id="4Z7Q">
    <property type="method" value="X-ray"/>
    <property type="resolution" value="2.70 A"/>
    <property type="chains" value="A/C=32-485"/>
</dbReference>
<dbReference type="PDB" id="5HDB">
    <property type="method" value="X-ray"/>
    <property type="resolution" value="2.70 A"/>
    <property type="chains" value="A/C=32-485"/>
</dbReference>
<dbReference type="PDB" id="6V4P">
    <property type="method" value="EM"/>
    <property type="resolution" value="2.80 A"/>
    <property type="chains" value="A=1-963"/>
</dbReference>
<dbReference type="PDB" id="7KN0">
    <property type="method" value="NMR"/>
    <property type="chains" value="A=989-1029"/>
</dbReference>
<dbReference type="PDB" id="7L8P">
    <property type="method" value="X-ray"/>
    <property type="resolution" value="2.35 A"/>
    <property type="chains" value="A/C=32-488"/>
</dbReference>
<dbReference type="PDB" id="7LA4">
    <property type="method" value="EM"/>
    <property type="resolution" value="3.30 A"/>
    <property type="chains" value="A=1-1039"/>
</dbReference>
<dbReference type="PDB" id="7SC4">
    <property type="method" value="X-ray"/>
    <property type="resolution" value="1.85 A"/>
    <property type="chains" value="A/B=1019-1039"/>
</dbReference>
<dbReference type="PDB" id="7SFT">
    <property type="method" value="NMR"/>
    <property type="chains" value="B=1019-1039"/>
</dbReference>
<dbReference type="PDB" id="7TCT">
    <property type="method" value="X-ray"/>
    <property type="resolution" value="2.50 A"/>
    <property type="chains" value="A/C=32-488"/>
</dbReference>
<dbReference type="PDB" id="7TD8">
    <property type="method" value="X-ray"/>
    <property type="resolution" value="2.60 A"/>
    <property type="chains" value="A/C=32-484"/>
</dbReference>
<dbReference type="PDB" id="7THO">
    <property type="method" value="X-ray"/>
    <property type="resolution" value="2.75 A"/>
    <property type="chains" value="A/C=32-485"/>
</dbReference>
<dbReference type="PDB" id="7TMZ">
    <property type="method" value="X-ray"/>
    <property type="resolution" value="2.20 A"/>
    <property type="chains" value="A/C=32-485"/>
</dbReference>
<dbReference type="PDB" id="7TPD">
    <property type="method" value="X-ray"/>
    <property type="resolution" value="2.60 A"/>
    <property type="chains" value="A/C=32-488"/>
</dbReference>
<dbReference type="PDB" id="7U60">
    <property type="method" value="X-ray"/>
    <property type="resolution" value="2.55 A"/>
    <property type="chains" value="A/C=32-486"/>
</dbReference>
<dbReference type="PDB" id="7U9F">
    <property type="method" value="X-ray"/>
    <property type="resolution" value="2.70 A"/>
    <property type="chains" value="A/C=32-485"/>
</dbReference>
<dbReference type="PDB" id="7U9V">
    <property type="method" value="X-ray"/>
    <property type="resolution" value="2.25 A"/>
    <property type="chains" value="A/C=32-485"/>
</dbReference>
<dbReference type="PDB" id="7UBR">
    <property type="method" value="X-ray"/>
    <property type="resolution" value="2.05 A"/>
    <property type="chains" value="A/C=32-485"/>
</dbReference>
<dbReference type="PDB" id="7UCY">
    <property type="method" value="X-ray"/>
    <property type="resolution" value="2.35 A"/>
    <property type="chains" value="A/C=32-488"/>
</dbReference>
<dbReference type="PDB" id="7UDG">
    <property type="method" value="X-ray"/>
    <property type="resolution" value="2.80 A"/>
    <property type="chains" value="A/C=32-488"/>
</dbReference>
<dbReference type="PDB" id="7UDH">
    <property type="method" value="X-ray"/>
    <property type="resolution" value="2.00 A"/>
    <property type="chains" value="A/C=32-488"/>
</dbReference>
<dbReference type="PDB" id="7UE0">
    <property type="method" value="X-ray"/>
    <property type="resolution" value="2.74 A"/>
    <property type="chains" value="A/C=32-488"/>
</dbReference>
<dbReference type="PDB" id="7UFH">
    <property type="method" value="X-ray"/>
    <property type="resolution" value="3.00 A"/>
    <property type="chains" value="A/C=32-488"/>
</dbReference>
<dbReference type="PDB" id="7UH8">
    <property type="method" value="X-ray"/>
    <property type="resolution" value="2.75 A"/>
    <property type="chains" value="A/C=32-488"/>
</dbReference>
<dbReference type="PDB" id="7UJE">
    <property type="method" value="X-ray"/>
    <property type="resolution" value="2.50 A"/>
    <property type="chains" value="A/C=32-485"/>
</dbReference>
<dbReference type="PDB" id="7UJK">
    <property type="method" value="X-ray"/>
    <property type="resolution" value="2.43 A"/>
    <property type="chains" value="A/C=32-488"/>
</dbReference>
<dbReference type="PDB" id="7UK9">
    <property type="method" value="X-ray"/>
    <property type="resolution" value="2.60 A"/>
    <property type="chains" value="A/C=32-488"/>
</dbReference>
<dbReference type="PDB" id="7UKO">
    <property type="method" value="X-ray"/>
    <property type="resolution" value="2.60 A"/>
    <property type="chains" value="A/C=32-488"/>
</dbReference>
<dbReference type="PDB" id="7UKP">
    <property type="method" value="X-ray"/>
    <property type="resolution" value="2.80 A"/>
    <property type="chains" value="A/C=32-488"/>
</dbReference>
<dbReference type="PDB" id="7UKT">
    <property type="method" value="X-ray"/>
    <property type="resolution" value="2.37 A"/>
    <property type="chains" value="A/C=32-488"/>
</dbReference>
<dbReference type="PDB" id="8GCD">
    <property type="method" value="EM"/>
    <property type="resolution" value="2.97 A"/>
    <property type="chains" value="A=1-1039"/>
</dbReference>
<dbReference type="PDB" id="8GCE">
    <property type="method" value="EM"/>
    <property type="resolution" value="3.12 A"/>
    <property type="chains" value="A=1-1039"/>
</dbReference>
<dbReference type="PDB" id="8T2U">
    <property type="method" value="EM"/>
    <property type="resolution" value="3.10 A"/>
    <property type="chains" value="A=32-1039"/>
</dbReference>
<dbReference type="PDB" id="8T2V">
    <property type="method" value="EM"/>
    <property type="resolution" value="3.40 A"/>
    <property type="chains" value="A=32-1039"/>
</dbReference>
<dbReference type="PDB" id="9AXL">
    <property type="method" value="EM"/>
    <property type="resolution" value="3.30 A"/>
    <property type="chains" value="A=1-1039"/>
</dbReference>
<dbReference type="PDB" id="9DEQ">
    <property type="method" value="EM"/>
    <property type="resolution" value="4.10 A"/>
    <property type="chains" value="A=32-1039"/>
</dbReference>
<dbReference type="PDB" id="9DER">
    <property type="method" value="EM"/>
    <property type="resolution" value="3.90 A"/>
    <property type="chains" value="A=32-1039"/>
</dbReference>
<dbReference type="PDBsum" id="1DPK"/>
<dbReference type="PDBsum" id="1DPQ"/>
<dbReference type="PDBsum" id="1KUP"/>
<dbReference type="PDBsum" id="1KUZ"/>
<dbReference type="PDBsum" id="1M8O"/>
<dbReference type="PDBsum" id="1S4W"/>
<dbReference type="PDBsum" id="1TYE"/>
<dbReference type="PDBsum" id="2K1A"/>
<dbReference type="PDBsum" id="2K9J"/>
<dbReference type="PDBsum" id="2KNC"/>
<dbReference type="PDBsum" id="2MTP"/>
<dbReference type="PDBsum" id="2N9Y"/>
<dbReference type="PDBsum" id="2VC2"/>
<dbReference type="PDBsum" id="2VDK"/>
<dbReference type="PDBsum" id="2VDL"/>
<dbReference type="PDBsum" id="2VDM"/>
<dbReference type="PDBsum" id="2VDN"/>
<dbReference type="PDBsum" id="2VDO"/>
<dbReference type="PDBsum" id="2VDP"/>
<dbReference type="PDBsum" id="2VDQ"/>
<dbReference type="PDBsum" id="2VDR"/>
<dbReference type="PDBsum" id="3FCS"/>
<dbReference type="PDBsum" id="3FCU"/>
<dbReference type="PDBsum" id="3NID"/>
<dbReference type="PDBsum" id="3NIF"/>
<dbReference type="PDBsum" id="3NIG"/>
<dbReference type="PDBsum" id="3T3M"/>
<dbReference type="PDBsum" id="3T3P"/>
<dbReference type="PDBsum" id="3ZDX"/>
<dbReference type="PDBsum" id="3ZDY"/>
<dbReference type="PDBsum" id="3ZDZ"/>
<dbReference type="PDBsum" id="3ZE0"/>
<dbReference type="PDBsum" id="3ZE1"/>
<dbReference type="PDBsum" id="3ZE2"/>
<dbReference type="PDBsum" id="4CAK"/>
<dbReference type="PDBsum" id="4Z7N"/>
<dbReference type="PDBsum" id="4Z7O"/>
<dbReference type="PDBsum" id="4Z7Q"/>
<dbReference type="PDBsum" id="5HDB"/>
<dbReference type="PDBsum" id="6V4P"/>
<dbReference type="PDBsum" id="7KN0"/>
<dbReference type="PDBsum" id="7L8P"/>
<dbReference type="PDBsum" id="7LA4"/>
<dbReference type="PDBsum" id="7SC4"/>
<dbReference type="PDBsum" id="7SFT"/>
<dbReference type="PDBsum" id="7TCT"/>
<dbReference type="PDBsum" id="7TD8"/>
<dbReference type="PDBsum" id="7THO"/>
<dbReference type="PDBsum" id="7TMZ"/>
<dbReference type="PDBsum" id="7TPD"/>
<dbReference type="PDBsum" id="7U60"/>
<dbReference type="PDBsum" id="7U9F"/>
<dbReference type="PDBsum" id="7U9V"/>
<dbReference type="PDBsum" id="7UBR"/>
<dbReference type="PDBsum" id="7UCY"/>
<dbReference type="PDBsum" id="7UDG"/>
<dbReference type="PDBsum" id="7UDH"/>
<dbReference type="PDBsum" id="7UE0"/>
<dbReference type="PDBsum" id="7UFH"/>
<dbReference type="PDBsum" id="7UH8"/>
<dbReference type="PDBsum" id="7UJE"/>
<dbReference type="PDBsum" id="7UJK"/>
<dbReference type="PDBsum" id="7UK9"/>
<dbReference type="PDBsum" id="7UKO"/>
<dbReference type="PDBsum" id="7UKP"/>
<dbReference type="PDBsum" id="7UKT"/>
<dbReference type="PDBsum" id="8GCD"/>
<dbReference type="PDBsum" id="8GCE"/>
<dbReference type="PDBsum" id="8T2U"/>
<dbReference type="PDBsum" id="8T2V"/>
<dbReference type="PDBsum" id="9AXL"/>
<dbReference type="PDBsum" id="9DEQ"/>
<dbReference type="PDBsum" id="9DER"/>
<dbReference type="BMRB" id="P08514"/>
<dbReference type="EMDB" id="EMD-21044"/>
<dbReference type="EMDB" id="EMD-2281"/>
<dbReference type="EMDB" id="EMD-23245"/>
<dbReference type="EMDB" id="EMD-29931"/>
<dbReference type="EMDB" id="EMD-29932"/>
<dbReference type="EMDB" id="EMD-40988"/>
<dbReference type="EMDB" id="EMD-40989"/>
<dbReference type="EMDB" id="EMD-43046"/>
<dbReference type="EMDB" id="EMD-43969"/>
<dbReference type="EMDB" id="EMD-43983"/>
<dbReference type="EMDB" id="EMD-46793"/>
<dbReference type="EMDB" id="EMD-46794"/>
<dbReference type="SMR" id="P08514"/>
<dbReference type="BioGRID" id="109881">
    <property type="interactions" value="22"/>
</dbReference>
<dbReference type="ComplexPortal" id="CPX-1799">
    <property type="entry name" value="Integrin alphaIIb-beta3 complex"/>
</dbReference>
<dbReference type="CORUM" id="P08514"/>
<dbReference type="DIP" id="DIP-68N"/>
<dbReference type="FunCoup" id="P08514">
    <property type="interactions" value="856"/>
</dbReference>
<dbReference type="IntAct" id="P08514">
    <property type="interactions" value="6"/>
</dbReference>
<dbReference type="MINT" id="P08514"/>
<dbReference type="STRING" id="9606.ENSP00000262407"/>
<dbReference type="BindingDB" id="P08514"/>
<dbReference type="ChEMBL" id="CHEMBL212"/>
<dbReference type="DrugBank" id="DB00054">
    <property type="generic name" value="Abciximab"/>
</dbReference>
<dbReference type="DrugBank" id="DB00063">
    <property type="generic name" value="Eptifibatide"/>
</dbReference>
<dbReference type="DrugBank" id="DB06472">
    <property type="generic name" value="Fradafiban"/>
</dbReference>
<dbReference type="DrugBank" id="DB09526">
    <property type="generic name" value="Hydroquinone"/>
</dbReference>
<dbReference type="DrugBank" id="DB04863">
    <property type="generic name" value="Lefradafiban"/>
</dbReference>
<dbReference type="DrugBank" id="DB00775">
    <property type="generic name" value="Tirofiban"/>
</dbReference>
<dbReference type="DrugCentral" id="P08514"/>
<dbReference type="GuidetoPHARMACOLOGY" id="2441"/>
<dbReference type="GlyCosmos" id="P08514">
    <property type="glycosylation" value="8 sites, 4 glycans"/>
</dbReference>
<dbReference type="GlyGen" id="P08514">
    <property type="glycosylation" value="8 sites, 4 O-linked glycans (2 sites)"/>
</dbReference>
<dbReference type="iPTMnet" id="P08514"/>
<dbReference type="PhosphoSitePlus" id="P08514"/>
<dbReference type="BioMuta" id="ITGA2B"/>
<dbReference type="DMDM" id="226694183"/>
<dbReference type="OGP" id="P08514"/>
<dbReference type="jPOST" id="P08514"/>
<dbReference type="MassIVE" id="P08514"/>
<dbReference type="PaxDb" id="9606-ENSP00000262407"/>
<dbReference type="PeptideAtlas" id="P08514"/>
<dbReference type="ProteomicsDB" id="52113">
    <molecule id="P08514-1"/>
</dbReference>
<dbReference type="ProteomicsDB" id="52114">
    <molecule id="P08514-2"/>
</dbReference>
<dbReference type="ProteomicsDB" id="52115">
    <molecule id="P08514-3"/>
</dbReference>
<dbReference type="TopDownProteomics" id="P08514-1">
    <molecule id="P08514-1"/>
</dbReference>
<dbReference type="ABCD" id="P08514">
    <property type="antibodies" value="23 sequenced antibodies"/>
</dbReference>
<dbReference type="Antibodypedia" id="4350">
    <property type="antibodies" value="1999 antibodies from 52 providers"/>
</dbReference>
<dbReference type="DNASU" id="3674"/>
<dbReference type="Ensembl" id="ENST00000262407.6">
    <molecule id="P08514-1"/>
    <property type="protein sequence ID" value="ENSP00000262407.5"/>
    <property type="gene ID" value="ENSG00000005961.19"/>
</dbReference>
<dbReference type="GeneID" id="3674"/>
<dbReference type="KEGG" id="hsa:3674"/>
<dbReference type="MANE-Select" id="ENST00000262407.6">
    <property type="protein sequence ID" value="ENSP00000262407.5"/>
    <property type="RefSeq nucleotide sequence ID" value="NM_000419.5"/>
    <property type="RefSeq protein sequence ID" value="NP_000410.2"/>
</dbReference>
<dbReference type="UCSC" id="uc002igt.2">
    <molecule id="P08514-1"/>
    <property type="organism name" value="human"/>
</dbReference>
<dbReference type="AGR" id="HGNC:6138"/>
<dbReference type="CTD" id="3674"/>
<dbReference type="DisGeNET" id="3674"/>
<dbReference type="GeneCards" id="ITGA2B"/>
<dbReference type="HGNC" id="HGNC:6138">
    <property type="gene designation" value="ITGA2B"/>
</dbReference>
<dbReference type="HPA" id="ENSG00000005961">
    <property type="expression patterns" value="Tissue enhanced (bone marrow, epididymis, lymphoid tissue)"/>
</dbReference>
<dbReference type="MalaCards" id="ITGA2B"/>
<dbReference type="MIM" id="187800">
    <property type="type" value="phenotype"/>
</dbReference>
<dbReference type="MIM" id="273800">
    <property type="type" value="phenotype"/>
</dbReference>
<dbReference type="MIM" id="607759">
    <property type="type" value="gene"/>
</dbReference>
<dbReference type="neXtProt" id="NX_P08514"/>
<dbReference type="OpenTargets" id="ENSG00000005961"/>
<dbReference type="Orphanet" id="140957">
    <property type="disease" value="Autosomal dominant macrothrombocytopenia"/>
</dbReference>
<dbReference type="Orphanet" id="853">
    <property type="disease" value="Fetal and neonatal alloimmune thrombocytopenia"/>
</dbReference>
<dbReference type="Orphanet" id="849">
    <property type="disease" value="Glanzmann thrombasthenia"/>
</dbReference>
<dbReference type="PharmGKB" id="PA29938"/>
<dbReference type="VEuPathDB" id="HostDB:ENSG00000005961"/>
<dbReference type="eggNOG" id="KOG3637">
    <property type="taxonomic scope" value="Eukaryota"/>
</dbReference>
<dbReference type="GeneTree" id="ENSGT00940000160724"/>
<dbReference type="HOGENOM" id="CLU_004111_4_1_1"/>
<dbReference type="InParanoid" id="P08514"/>
<dbReference type="OMA" id="LQMDTAN"/>
<dbReference type="OrthoDB" id="5317514at2759"/>
<dbReference type="PAN-GO" id="P08514">
    <property type="GO annotations" value="8 GO annotations based on evolutionary models"/>
</dbReference>
<dbReference type="PhylomeDB" id="P08514"/>
<dbReference type="TreeFam" id="TF105391"/>
<dbReference type="PathwayCommons" id="P08514"/>
<dbReference type="Reactome" id="R-HSA-114608">
    <property type="pathway name" value="Platelet degranulation"/>
</dbReference>
<dbReference type="Reactome" id="R-HSA-216083">
    <property type="pathway name" value="Integrin cell surface interactions"/>
</dbReference>
<dbReference type="Reactome" id="R-HSA-3000178">
    <property type="pathway name" value="ECM proteoglycans"/>
</dbReference>
<dbReference type="Reactome" id="R-HSA-354192">
    <property type="pathway name" value="Integrin signaling"/>
</dbReference>
<dbReference type="Reactome" id="R-HSA-354194">
    <property type="pathway name" value="GRB2:SOS provides linkage to MAPK signaling for Integrins"/>
</dbReference>
<dbReference type="Reactome" id="R-HSA-372708">
    <property type="pathway name" value="p130Cas linkage to MAPK signaling for integrins"/>
</dbReference>
<dbReference type="Reactome" id="R-HSA-445144">
    <property type="pathway name" value="Signal transduction by L1"/>
</dbReference>
<dbReference type="Reactome" id="R-HSA-5674135">
    <property type="pathway name" value="MAP2K and MAPK activation"/>
</dbReference>
<dbReference type="Reactome" id="R-HSA-6802946">
    <property type="pathway name" value="Signaling by moderate kinase activity BRAF mutants"/>
</dbReference>
<dbReference type="Reactome" id="R-HSA-6802948">
    <property type="pathway name" value="Signaling by high-kinase activity BRAF mutants"/>
</dbReference>
<dbReference type="Reactome" id="R-HSA-6802952">
    <property type="pathway name" value="Signaling by BRAF and RAF1 fusions"/>
</dbReference>
<dbReference type="Reactome" id="R-HSA-6802955">
    <property type="pathway name" value="Paradoxical activation of RAF signaling by kinase inactive BRAF"/>
</dbReference>
<dbReference type="Reactome" id="R-HSA-8936459">
    <property type="pathway name" value="RUNX1 regulates genes involved in megakaryocyte differentiation and platelet function"/>
</dbReference>
<dbReference type="Reactome" id="R-HSA-9649948">
    <property type="pathway name" value="Signaling downstream of RAS mutants"/>
</dbReference>
<dbReference type="Reactome" id="R-HSA-9656223">
    <property type="pathway name" value="Signaling by RAF1 mutants"/>
</dbReference>
<dbReference type="SignaLink" id="P08514"/>
<dbReference type="SIGNOR" id="P08514"/>
<dbReference type="BioGRID-ORCS" id="3674">
    <property type="hits" value="20 hits in 1173 CRISPR screens"/>
</dbReference>
<dbReference type="ChiTaRS" id="ITGA2B">
    <property type="organism name" value="human"/>
</dbReference>
<dbReference type="EvolutionaryTrace" id="P08514"/>
<dbReference type="GeneWiki" id="ITGA2B"/>
<dbReference type="GenomeRNAi" id="3674"/>
<dbReference type="Pharos" id="P08514">
    <property type="development level" value="Tclin"/>
</dbReference>
<dbReference type="PRO" id="PR:P08514"/>
<dbReference type="Proteomes" id="UP000005640">
    <property type="component" value="Chromosome 17"/>
</dbReference>
<dbReference type="RNAct" id="P08514">
    <property type="molecule type" value="protein"/>
</dbReference>
<dbReference type="Bgee" id="ENSG00000005961">
    <property type="expression patterns" value="Expressed in monocyte and 130 other cell types or tissues"/>
</dbReference>
<dbReference type="ExpressionAtlas" id="P08514">
    <property type="expression patterns" value="baseline and differential"/>
</dbReference>
<dbReference type="GO" id="GO:0072562">
    <property type="term" value="C:blood microparticle"/>
    <property type="evidence" value="ECO:0007005"/>
    <property type="project" value="UniProtKB"/>
</dbReference>
<dbReference type="GO" id="GO:0009986">
    <property type="term" value="C:cell surface"/>
    <property type="evidence" value="ECO:0007005"/>
    <property type="project" value="UniProtKB"/>
</dbReference>
<dbReference type="GO" id="GO:0009897">
    <property type="term" value="C:external side of plasma membrane"/>
    <property type="evidence" value="ECO:0000318"/>
    <property type="project" value="GO_Central"/>
</dbReference>
<dbReference type="GO" id="GO:0070062">
    <property type="term" value="C:extracellular exosome"/>
    <property type="evidence" value="ECO:0000314"/>
    <property type="project" value="UniProtKB"/>
</dbReference>
<dbReference type="GO" id="GO:0005925">
    <property type="term" value="C:focal adhesion"/>
    <property type="evidence" value="ECO:0007669"/>
    <property type="project" value="Ensembl"/>
</dbReference>
<dbReference type="GO" id="GO:0070442">
    <property type="term" value="C:integrin alphaIIb-beta3 complex"/>
    <property type="evidence" value="ECO:0000353"/>
    <property type="project" value="ComplexPortal"/>
</dbReference>
<dbReference type="GO" id="GO:0008305">
    <property type="term" value="C:integrin complex"/>
    <property type="evidence" value="ECO:0000318"/>
    <property type="project" value="GO_Central"/>
</dbReference>
<dbReference type="GO" id="GO:0005886">
    <property type="term" value="C:plasma membrane"/>
    <property type="evidence" value="ECO:0000314"/>
    <property type="project" value="HPA"/>
</dbReference>
<dbReference type="GO" id="GO:0031092">
    <property type="term" value="C:platelet alpha granule membrane"/>
    <property type="evidence" value="ECO:0000304"/>
    <property type="project" value="Reactome"/>
</dbReference>
<dbReference type="GO" id="GO:0050840">
    <property type="term" value="F:extracellular matrix binding"/>
    <property type="evidence" value="ECO:0007669"/>
    <property type="project" value="Ensembl"/>
</dbReference>
<dbReference type="GO" id="GO:0070051">
    <property type="term" value="F:fibrinogen binding"/>
    <property type="evidence" value="ECO:0007669"/>
    <property type="project" value="Ensembl"/>
</dbReference>
<dbReference type="GO" id="GO:0042802">
    <property type="term" value="F:identical protein binding"/>
    <property type="evidence" value="ECO:0000353"/>
    <property type="project" value="IntAct"/>
</dbReference>
<dbReference type="GO" id="GO:0005178">
    <property type="term" value="F:integrin binding"/>
    <property type="evidence" value="ECO:0000318"/>
    <property type="project" value="GO_Central"/>
</dbReference>
<dbReference type="GO" id="GO:0046872">
    <property type="term" value="F:metal ion binding"/>
    <property type="evidence" value="ECO:0007669"/>
    <property type="project" value="UniProtKB-KW"/>
</dbReference>
<dbReference type="GO" id="GO:0060090">
    <property type="term" value="F:molecular adaptor activity"/>
    <property type="evidence" value="ECO:0000269"/>
    <property type="project" value="DisProt"/>
</dbReference>
<dbReference type="GO" id="GO:0001525">
    <property type="term" value="P:angiogenesis"/>
    <property type="evidence" value="ECO:0000318"/>
    <property type="project" value="GO_Central"/>
</dbReference>
<dbReference type="GO" id="GO:0033627">
    <property type="term" value="P:cell adhesion mediated by integrin"/>
    <property type="evidence" value="ECO:0000318"/>
    <property type="project" value="GO_Central"/>
</dbReference>
<dbReference type="GO" id="GO:0098609">
    <property type="term" value="P:cell-cell adhesion"/>
    <property type="evidence" value="ECO:0000318"/>
    <property type="project" value="GO_Central"/>
</dbReference>
<dbReference type="GO" id="GO:0007160">
    <property type="term" value="P:cell-matrix adhesion"/>
    <property type="evidence" value="ECO:0000303"/>
    <property type="project" value="ComplexPortal"/>
</dbReference>
<dbReference type="GO" id="GO:0007229">
    <property type="term" value="P:integrin-mediated signaling pathway"/>
    <property type="evidence" value="ECO:0007005"/>
    <property type="project" value="UniProtKB"/>
</dbReference>
<dbReference type="GO" id="GO:0002687">
    <property type="term" value="P:positive regulation of leukocyte migration"/>
    <property type="evidence" value="ECO:0007669"/>
    <property type="project" value="Ensembl"/>
</dbReference>
<dbReference type="DisProt" id="DP01841"/>
<dbReference type="FunFam" id="2.60.40.1510:FF:000001">
    <property type="entry name" value="Integrin alpha V"/>
    <property type="match status" value="1"/>
</dbReference>
<dbReference type="FunFam" id="2.130.10.130:FF:000012">
    <property type="entry name" value="Integrin alpha-IIb"/>
    <property type="match status" value="1"/>
</dbReference>
<dbReference type="FunFam" id="1.20.5.930:FF:000001">
    <property type="entry name" value="Integrin subunit alpha V"/>
    <property type="match status" value="1"/>
</dbReference>
<dbReference type="FunFam" id="2.60.40.1460:FF:000001">
    <property type="entry name" value="Integrin, alpha V"/>
    <property type="match status" value="1"/>
</dbReference>
<dbReference type="Gene3D" id="1.20.5.930">
    <property type="entry name" value="Bicelle-embedded integrin alpha(iib) transmembrane segment"/>
    <property type="match status" value="1"/>
</dbReference>
<dbReference type="Gene3D" id="2.130.10.130">
    <property type="entry name" value="Integrin alpha, N-terminal"/>
    <property type="match status" value="1"/>
</dbReference>
<dbReference type="Gene3D" id="2.60.40.1460">
    <property type="entry name" value="Integrin domains. Chain A, domain 2"/>
    <property type="match status" value="1"/>
</dbReference>
<dbReference type="Gene3D" id="2.60.40.1510">
    <property type="entry name" value="ntegrin, alpha v. Chain A, domain 3"/>
    <property type="match status" value="1"/>
</dbReference>
<dbReference type="Gene3D" id="2.60.40.1530">
    <property type="entry name" value="ntegrin, alpha v. Chain A, domain 4"/>
    <property type="match status" value="1"/>
</dbReference>
<dbReference type="InterPro" id="IPR013517">
    <property type="entry name" value="FG-GAP"/>
</dbReference>
<dbReference type="InterPro" id="IPR013519">
    <property type="entry name" value="Int_alpha_beta-p"/>
</dbReference>
<dbReference type="InterPro" id="IPR000413">
    <property type="entry name" value="Integrin_alpha"/>
</dbReference>
<dbReference type="InterPro" id="IPR018184">
    <property type="entry name" value="Integrin_alpha_C_CS"/>
</dbReference>
<dbReference type="InterPro" id="IPR013649">
    <property type="entry name" value="Integrin_alpha_Ig-like_1"/>
</dbReference>
<dbReference type="InterPro" id="IPR048285">
    <property type="entry name" value="Integrin_alpha_Ig-like_2"/>
</dbReference>
<dbReference type="InterPro" id="IPR048286">
    <property type="entry name" value="Integrin_alpha_Ig-like_3"/>
</dbReference>
<dbReference type="InterPro" id="IPR028994">
    <property type="entry name" value="Integrin_alpha_N"/>
</dbReference>
<dbReference type="InterPro" id="IPR032695">
    <property type="entry name" value="Integrin_dom_sf"/>
</dbReference>
<dbReference type="PANTHER" id="PTHR23220">
    <property type="entry name" value="INTEGRIN ALPHA"/>
    <property type="match status" value="1"/>
</dbReference>
<dbReference type="PANTHER" id="PTHR23220:SF73">
    <property type="entry name" value="INTEGRIN ALPHA-IIB"/>
    <property type="match status" value="1"/>
</dbReference>
<dbReference type="Pfam" id="PF01839">
    <property type="entry name" value="FG-GAP"/>
    <property type="match status" value="2"/>
</dbReference>
<dbReference type="Pfam" id="PF08441">
    <property type="entry name" value="Integrin_A_Ig_1"/>
    <property type="match status" value="1"/>
</dbReference>
<dbReference type="Pfam" id="PF20805">
    <property type="entry name" value="Integrin_A_Ig_2"/>
    <property type="match status" value="1"/>
</dbReference>
<dbReference type="Pfam" id="PF20806">
    <property type="entry name" value="Integrin_A_Ig_3"/>
    <property type="match status" value="1"/>
</dbReference>
<dbReference type="Pfam" id="PF00357">
    <property type="entry name" value="Integrin_alpha"/>
    <property type="match status" value="1"/>
</dbReference>
<dbReference type="PRINTS" id="PR01185">
    <property type="entry name" value="INTEGRINA"/>
</dbReference>
<dbReference type="SMART" id="SM00191">
    <property type="entry name" value="Int_alpha"/>
    <property type="match status" value="5"/>
</dbReference>
<dbReference type="SUPFAM" id="SSF69318">
    <property type="entry name" value="Integrin alpha N-terminal domain"/>
    <property type="match status" value="1"/>
</dbReference>
<dbReference type="SUPFAM" id="SSF69179">
    <property type="entry name" value="Integrin domains"/>
    <property type="match status" value="3"/>
</dbReference>
<dbReference type="PROSITE" id="PS51470">
    <property type="entry name" value="FG_GAP"/>
    <property type="match status" value="7"/>
</dbReference>
<dbReference type="PROSITE" id="PS00242">
    <property type="entry name" value="INTEGRIN_ALPHA"/>
    <property type="match status" value="1"/>
</dbReference>
<organism>
    <name type="scientific">Homo sapiens</name>
    <name type="common">Human</name>
    <dbReference type="NCBI Taxonomy" id="9606"/>
    <lineage>
        <taxon>Eukaryota</taxon>
        <taxon>Metazoa</taxon>
        <taxon>Chordata</taxon>
        <taxon>Craniata</taxon>
        <taxon>Vertebrata</taxon>
        <taxon>Euteleostomi</taxon>
        <taxon>Mammalia</taxon>
        <taxon>Eutheria</taxon>
        <taxon>Euarchontoglires</taxon>
        <taxon>Primates</taxon>
        <taxon>Haplorrhini</taxon>
        <taxon>Catarrhini</taxon>
        <taxon>Hominidae</taxon>
        <taxon>Homo</taxon>
    </lineage>
</organism>
<name>ITA2B_HUMAN</name>
<sequence length="1039" mass="113377">MARALCPLQALWLLEWVLLLLGPCAAPPAWALNLDPVQLTFYAGPNGSQFGFSLDFHKDSHGRVAIVVGAPRTLGPSQEETGGVFLCPWRAEGGQCPSLLFDLRDETRNVGSQTLQTFKARQGLGASVVSWSDVIVACAPWQHWNVLEKTEEAEKTPVGSCFLAQPESGRRAEYSPCRGNTLSRIYVENDFSWDKRYCEAGFSSVVTQAGELVLGAPGGYYFLGLLAQAPVADIFSSYRPGILLWHVSSQSLSFDSSNPEYFDGYWGYSVAVGEFDGDLNTTEYVVGAPTWSWTLGAVEILDSYYQRLHRLRGEQMASYFGHSVAVTDVNGDGRHDLLVGAPLYMESRADRKLAEVGRVYLFLQPRGPHALGAPSLLLTGTQLYGRFGSAIAPLGDLDRDGYNDIAVAAPYGGPSGRGQVLVFLGQSEGLRSRPSQVLDSPFPTGSAFGFSLRGAVDIDDNGYPDLIVGAYGANQVAVYRAQPVVKASVQLLVQDSLNPAVKSCVLPQTKTPVSCFNIQMCVGATGHNIPQKLSLNAELQLDRQKPRQGRRVLLLGSQQAGTTLNLDLGGKHSPICHTTMAFLRDEADFRDKLSPIVLSLNVSLPPTEAGMAPAVVLHGDTHVQEQTRIVLDCGEDDVCVPQLQLTASVTGSPLLVGADNVLELQMDAANEGEGAYEAELAVHLPQGAHYMRALSNVEGFERLICNQKKENETRVVLCELGNPMKKNAQIGIAMLVSVGNLEEAGESVSFQLQIRSKNSQNPNSKIVLLDVPVRAEAQVELRGNSFPASLVVAAEEGEREQNSLDSWGPKVEHTYELHNNGPGTVNGLHLSIHLPGQSQPSDLLYILDIQPQGGLQCFPQPPVNPLKVDWGLPIPSPSPIHPAHHKRDRRQIFLPEPEQPSRLQDPVLVSCDSAPCTVVQCDLQEMARGQRAMVTVLAFLWLPSLYQRPLDQFVLQSHAWFNVSSLPYAVPPLSLPRGEAQVWTQLLRALEERAIPIWWVLVGVLGGLLLLTILVLAMWKVGFFKRNRPPLEEDDEEGE</sequence>
<gene>
    <name type="primary">ITGA2B</name>
    <name type="synonym">GP2B</name>
    <name type="synonym">ITGAB</name>
</gene>
<protein>
    <recommendedName>
        <fullName>Integrin alpha-IIb</fullName>
    </recommendedName>
    <alternativeName>
        <fullName>GPalpha IIb</fullName>
        <shortName>GPIIb</shortName>
    </alternativeName>
    <alternativeName>
        <fullName>Platelet membrane glycoprotein IIb</fullName>
    </alternativeName>
    <cdAntigenName>CD41</cdAntigenName>
    <component>
        <recommendedName>
            <fullName>Integrin alpha-IIb heavy chain</fullName>
        </recommendedName>
    </component>
    <component>
        <recommendedName>
            <fullName>Integrin alpha-IIb light chain, form 1</fullName>
        </recommendedName>
    </component>
    <component>
        <recommendedName>
            <fullName>Integrin alpha-IIb light chain, form 2</fullName>
        </recommendedName>
    </component>
</protein>
<feature type="signal peptide" evidence="21 33 39">
    <location>
        <begin position="1"/>
        <end position="31"/>
    </location>
</feature>
<feature type="chain" id="PRO_0000016275" description="Integrin alpha-IIb">
    <location>
        <begin position="32"/>
        <end position="1039"/>
    </location>
</feature>
<feature type="chain" id="PRO_0000016276" description="Integrin alpha-IIb heavy chain">
    <location>
        <begin position="32"/>
        <end position="887"/>
    </location>
</feature>
<feature type="chain" id="PRO_0000292348" description="Integrin alpha-IIb light chain, form 1">
    <location>
        <begin position="891"/>
        <end position="1039"/>
    </location>
</feature>
<feature type="chain" id="PRO_0000016277" description="Integrin alpha-IIb light chain, form 2">
    <location>
        <begin position="903"/>
        <end position="1039"/>
    </location>
</feature>
<feature type="topological domain" description="Extracellular" evidence="3">
    <location>
        <begin position="32"/>
        <end position="993"/>
    </location>
</feature>
<feature type="transmembrane region" description="Helical" evidence="3">
    <location>
        <begin position="994"/>
        <end position="1019"/>
    </location>
</feature>
<feature type="topological domain" description="Cytoplasmic" evidence="3">
    <location>
        <begin position="1020"/>
        <end position="1039"/>
    </location>
</feature>
<feature type="repeat" description="FG-GAP 1" evidence="4">
    <location>
        <begin position="35"/>
        <end position="96"/>
    </location>
</feature>
<feature type="repeat" description="FG-GAP 2" evidence="4">
    <location>
        <begin position="110"/>
        <end position="173"/>
    </location>
</feature>
<feature type="repeat" description="FG-GAP 3" evidence="4">
    <location>
        <begin position="187"/>
        <end position="238"/>
    </location>
</feature>
<feature type="repeat" description="FG-GAP 4" evidence="4">
    <location>
        <begin position="251"/>
        <end position="305"/>
    </location>
</feature>
<feature type="repeat" description="FG-GAP 5" evidence="4">
    <location>
        <begin position="306"/>
        <end position="371"/>
    </location>
</feature>
<feature type="repeat" description="FG-GAP 6" evidence="4">
    <location>
        <begin position="373"/>
        <end position="432"/>
    </location>
</feature>
<feature type="repeat" description="FG-GAP 7" evidence="4">
    <location>
        <begin position="435"/>
        <end position="496"/>
    </location>
</feature>
<feature type="short sequence motif" description="GFFKR motif">
    <location>
        <begin position="1022"/>
        <end position="1026"/>
    </location>
</feature>
<feature type="binding site" evidence="16 20 53 54 55">
    <location>
        <position position="274"/>
    </location>
    <ligand>
        <name>Ca(2+)</name>
        <dbReference type="ChEBI" id="CHEBI:29108"/>
        <label>1</label>
    </ligand>
</feature>
<feature type="binding site" evidence="16 20 53 54 55">
    <location>
        <position position="276"/>
    </location>
    <ligand>
        <name>Ca(2+)</name>
        <dbReference type="ChEBI" id="CHEBI:29108"/>
        <label>1</label>
    </ligand>
</feature>
<feature type="binding site" evidence="16 20 53 54 55">
    <location>
        <position position="278"/>
    </location>
    <ligand>
        <name>Ca(2+)</name>
        <dbReference type="ChEBI" id="CHEBI:29108"/>
        <label>1</label>
    </ligand>
</feature>
<feature type="binding site" evidence="16 20 53 54 55">
    <location>
        <position position="281"/>
    </location>
    <ligand>
        <name>Ca(2+)</name>
        <dbReference type="ChEBI" id="CHEBI:29108"/>
        <label>1</label>
    </ligand>
</feature>
<feature type="binding site" evidence="16 20 53 54 55">
    <location>
        <position position="283"/>
    </location>
    <ligand>
        <name>Ca(2+)</name>
        <dbReference type="ChEBI" id="CHEBI:29108"/>
        <label>1</label>
    </ligand>
</feature>
<feature type="binding site" evidence="16 20 53 54 55">
    <location>
        <position position="328"/>
    </location>
    <ligand>
        <name>Ca(2+)</name>
        <dbReference type="ChEBI" id="CHEBI:29108"/>
        <label>2</label>
    </ligand>
</feature>
<feature type="binding site" evidence="16 20 53 54 55">
    <location>
        <position position="330"/>
    </location>
    <ligand>
        <name>Ca(2+)</name>
        <dbReference type="ChEBI" id="CHEBI:29108"/>
        <label>2</label>
    </ligand>
</feature>
<feature type="binding site" evidence="16 20 53 54 55">
    <location>
        <position position="332"/>
    </location>
    <ligand>
        <name>Ca(2+)</name>
        <dbReference type="ChEBI" id="CHEBI:29108"/>
        <label>2</label>
    </ligand>
</feature>
<feature type="binding site" evidence="16 20 53 54 55">
    <location>
        <position position="334"/>
    </location>
    <ligand>
        <name>Ca(2+)</name>
        <dbReference type="ChEBI" id="CHEBI:29108"/>
        <label>2</label>
    </ligand>
</feature>
<feature type="binding site" evidence="16 20 53 54 55">
    <location>
        <position position="336"/>
    </location>
    <ligand>
        <name>Ca(2+)</name>
        <dbReference type="ChEBI" id="CHEBI:29108"/>
        <label>2</label>
    </ligand>
</feature>
<feature type="binding site" evidence="16 20 53 54 55">
    <location>
        <position position="396"/>
    </location>
    <ligand>
        <name>Ca(2+)</name>
        <dbReference type="ChEBI" id="CHEBI:29108"/>
        <label>3</label>
    </ligand>
</feature>
<feature type="binding site" evidence="16 20 53 54 55">
    <location>
        <position position="398"/>
    </location>
    <ligand>
        <name>Ca(2+)</name>
        <dbReference type="ChEBI" id="CHEBI:29108"/>
        <label>3</label>
    </ligand>
</feature>
<feature type="binding site" evidence="16 20 53 54 55">
    <location>
        <position position="400"/>
    </location>
    <ligand>
        <name>Ca(2+)</name>
        <dbReference type="ChEBI" id="CHEBI:29108"/>
        <label>3</label>
    </ligand>
</feature>
<feature type="binding site" evidence="16 20 53 54 55">
    <location>
        <position position="402"/>
    </location>
    <ligand>
        <name>Ca(2+)</name>
        <dbReference type="ChEBI" id="CHEBI:29108"/>
        <label>3</label>
    </ligand>
</feature>
<feature type="binding site" evidence="16 20 53 54 55">
    <location>
        <position position="404"/>
    </location>
    <ligand>
        <name>Ca(2+)</name>
        <dbReference type="ChEBI" id="CHEBI:29108"/>
        <label>3</label>
    </ligand>
</feature>
<feature type="binding site" evidence="16 20 53 54 55">
    <location>
        <position position="457"/>
    </location>
    <ligand>
        <name>Ca(2+)</name>
        <dbReference type="ChEBI" id="CHEBI:29108"/>
        <label>4</label>
    </ligand>
</feature>
<feature type="binding site" evidence="16 20 53 54 55">
    <location>
        <position position="459"/>
    </location>
    <ligand>
        <name>Ca(2+)</name>
        <dbReference type="ChEBI" id="CHEBI:29108"/>
        <label>4</label>
    </ligand>
</feature>
<feature type="binding site" evidence="16 20 53 54 55">
    <location>
        <position position="461"/>
    </location>
    <ligand>
        <name>Ca(2+)</name>
        <dbReference type="ChEBI" id="CHEBI:29108"/>
        <label>4</label>
    </ligand>
</feature>
<feature type="binding site" evidence="16 20 53 54 55">
    <location>
        <position position="463"/>
    </location>
    <ligand>
        <name>Ca(2+)</name>
        <dbReference type="ChEBI" id="CHEBI:29108"/>
        <label>4</label>
    </ligand>
</feature>
<feature type="binding site" evidence="16 20 53 54 55">
    <location>
        <position position="465"/>
    </location>
    <ligand>
        <name>Ca(2+)</name>
        <dbReference type="ChEBI" id="CHEBI:29108"/>
        <label>4</label>
    </ligand>
</feature>
<feature type="modified residue" description="Pyrrolidone carboxylic acid; in light chain form 1" evidence="25">
    <location>
        <position position="891"/>
    </location>
</feature>
<feature type="glycosylation site" description="N-linked (GlcNAc...) asparagine" evidence="16 20 32 53 54 55">
    <location>
        <position position="46"/>
    </location>
</feature>
<feature type="glycosylation site" description="N-linked (GlcNAc...) asparagine" evidence="20 32 54">
    <location>
        <position position="280"/>
    </location>
</feature>
<feature type="glycosylation site" description="N-linked (GlcNAc...) asparagine" evidence="17 20 32 54">
    <location>
        <position position="601"/>
    </location>
</feature>
<feature type="glycosylation site" description="N-linked (GlcNAc...) asparagine" evidence="32">
    <location>
        <position position="711"/>
    </location>
</feature>
<feature type="glycosylation site" description="O-linked (GalNAc...) serine; in variant S-874">
    <location>
        <position position="874"/>
    </location>
</feature>
<feature type="glycosylation site" description="O-linked (GalNAc...) serine" evidence="36">
    <location>
        <position position="878"/>
    </location>
</feature>
<feature type="glycosylation site" description="N-linked (GlcNAc...) asparagine">
    <location>
        <position position="962"/>
    </location>
</feature>
<feature type="disulfide bond" evidence="16 20 32 53 54 55">
    <location>
        <begin position="87"/>
        <end position="96"/>
    </location>
</feature>
<feature type="disulfide bond" evidence="16 20 32 53 54 55">
    <location>
        <begin position="138"/>
        <end position="161"/>
    </location>
</feature>
<feature type="disulfide bond" evidence="16 20 32 53 54 55">
    <location>
        <begin position="177"/>
        <end position="198"/>
    </location>
</feature>
<feature type="disulfide bond" evidence="20 32 54">
    <location>
        <begin position="504"/>
        <end position="515"/>
    </location>
</feature>
<feature type="disulfide bond" evidence="20 32 54">
    <location>
        <begin position="521"/>
        <end position="576"/>
    </location>
</feature>
<feature type="disulfide bond" evidence="20 32 54">
    <location>
        <begin position="633"/>
        <end position="639"/>
    </location>
</feature>
<feature type="disulfide bond" evidence="20 32 54">
    <location>
        <begin position="705"/>
        <end position="718"/>
    </location>
</feature>
<feature type="disulfide bond" description="Interchain (between heavy and light chains)" evidence="20 54">
    <location>
        <begin position="857"/>
        <end position="921"/>
    </location>
</feature>
<feature type="disulfide bond" evidence="20 54">
    <location>
        <begin position="911"/>
        <end position="916"/>
    </location>
</feature>
<feature type="splice variant" id="VSP_002736" description="In isoform 3." evidence="52">
    <original>SCDSAPCTVVQCDLQEMARGQRAMVTVLAFLWLPSLYQRPLDQFVLQSHAWFNVSSLPYAVPPLSLPRGEAQVWTQLLRALEERAIPIWWVLVGVLGGLLLLTILVLAMWKVGFFKRNRPPLEEDDEEGE</original>
    <variation>VSRLSGLWPGLPGTHGAEGMGGGRGVRVCCGPLWATLGPWEHFK</variation>
    <location>
        <begin position="910"/>
        <end position="1039"/>
    </location>
</feature>
<feature type="splice variant" id="VSP_002737" description="In isoform 2." evidence="52">
    <location>
        <begin position="948"/>
        <end position="981"/>
    </location>
</feature>
<feature type="sequence variant" id="VAR_014176" description="In dbSNP:rs5915." evidence="6">
    <original>T</original>
    <variation>I</variation>
    <location>
        <position position="40"/>
    </location>
</feature>
<feature type="sequence variant" id="VAR_030445" description="In GT1; cells co-transfected with mutated alpha-IIb and wild-type beta-3 scarcely expressed the alpha-IIb/beta-3 complex; dbSNP:rs1052533574." evidence="11">
    <original>L</original>
    <variation>P</variation>
    <location>
        <position position="86"/>
    </location>
</feature>
<feature type="sequence variant" id="VAR_030446" description="In GT1; dbSNP:rs2143489510." evidence="10">
    <original>A</original>
    <variation>V</variation>
    <location>
        <position position="139"/>
    </location>
</feature>
<feature type="sequence variant" id="VAR_030447" description="In GT1; uncertain significance." evidence="9">
    <original>C</original>
    <variation>W</variation>
    <location>
        <position position="161"/>
    </location>
</feature>
<feature type="sequence variant" id="VAR_030448" description="In GT1; abolishes the binding function of alpha-IIb/beta-3 for soluble ligands without disturbing alpha-IIb/beta-3 expression; functional defect is likely caused by its allosteric effect rather than by a defect in the ligand-binding site itself; dbSNP:rs2048640612." evidence="13">
    <original>Y</original>
    <variation>H</variation>
    <location>
        <position position="174"/>
    </location>
</feature>
<feature type="sequence variant" id="VAR_009885" description="In GT1; impairs surface expression of alpha-IIb/beta-3 and abrogates ligand binding to the activated integrin; dbSNP:rs2048640485." evidence="8 10">
    <original>P</original>
    <variation>A</variation>
    <location>
        <position position="176"/>
    </location>
</feature>
<feature type="sequence variant" id="VAR_009886" description="In GT1; impairs surface expression of alpha-IIb/beta-3; dbSNP:rs148327798." evidence="8">
    <original>P</original>
    <variation>L</variation>
    <location>
        <position position="176"/>
    </location>
</feature>
<feature type="sequence variant" id="VAR_030449" description="In GT1; results in abrogation of alpha-IIb/beta-3 complex formation." evidence="15">
    <original>F</original>
    <variation>C</variation>
    <location>
        <position position="202"/>
    </location>
</feature>
<feature type="sequence variant" id="VAR_030450" description="In GT1; dbSNP:rs2143485911." evidence="43">
    <original>T</original>
    <variation>I</variation>
    <location>
        <position position="207"/>
    </location>
</feature>
<feature type="sequence variant" id="VAR_030451" description="In GT1; disrupts the structural conformation and the ligand binding properties of the heterodimeric complex; in addition the mutation appears to confer susceptibility to proteolysis; dbSNP:rs137852911." evidence="44">
    <original>L</original>
    <variation>P</variation>
    <location>
        <position position="214"/>
    </location>
</feature>
<feature type="sequence variant" id="VAR_030452" description="In GT1; uncertain significance; dbSNP:rs2048633474." evidence="9">
    <original>F</original>
    <variation>L</variation>
    <location>
        <position position="222"/>
    </location>
</feature>
<feature type="sequence variant" id="VAR_030453" description="In GT1; dbSNP:rs2048627164." evidence="10">
    <original>G</original>
    <variation>E</variation>
    <location>
        <position position="267"/>
    </location>
</feature>
<feature type="sequence variant" id="VAR_003979" description="In GT1; alters the heterodimer conformation thus impairing their intracellular transport; dbSNP:rs137852907." evidence="38">
    <original>G</original>
    <variation>D</variation>
    <location>
        <position position="273"/>
    </location>
</feature>
<feature type="sequence variant" id="VAR_054820" description="In dbSNP:rs1126554." evidence="28 31">
    <original>G</original>
    <variation>A</variation>
    <location>
        <position position="313"/>
    </location>
</feature>
<feature type="sequence variant" id="VAR_009887" description="In GT1; type I; impairs surface expression of alpha-IIb/beta-3." evidence="45">
    <original>F</original>
    <variation>S</variation>
    <location>
        <position position="320"/>
    </location>
</feature>
<feature type="sequence variant" id="VAR_030454" description="In GT1; expression of mutant subunit alpha-IIb/bet-3 is 28% of control; mutant pro-alpha-IIb subunit is retained in the endoplasmic reticulum; dbSNP:rs2048619428." evidence="12">
    <original>V</original>
    <variation>F</variation>
    <location>
        <position position="329"/>
    </location>
</feature>
<feature type="sequence variant" id="VAR_009888" description="In GT1; type I; impairs surface expression of alpha-IIb/beta-3; dbSNP:rs137852910." evidence="45 46">
    <original>E</original>
    <variation>K</variation>
    <location>
        <position position="355"/>
    </location>
</feature>
<feature type="sequence variant" id="VAR_003980" description="In GT1; type II; dbSNP:rs137852908." evidence="37">
    <original>R</original>
    <variation>H</variation>
    <location>
        <position position="358"/>
    </location>
</feature>
<feature type="sequence variant" id="VAR_030455" description="In GT1; uncertain significance; dbSNP:rs766006685." evidence="10">
    <original>G</original>
    <variation>D</variation>
    <location>
        <position position="380"/>
    </location>
</feature>
<feature type="sequence variant" id="VAR_030456" description="In GT1; expression of mutant subunit alpha-IIb/bet-3 is 11% of control; mutant pro-alpha-IIb subunit is retained in the endoplasmic reticulum; dbSNP:rs75622274." evidence="10 12 22">
    <original>I</original>
    <variation>T</variation>
    <location>
        <position position="405"/>
    </location>
</feature>
<feature type="sequence variant" id="VAR_030457" description="In GT1; dbSNP:rs780786843." evidence="9">
    <original>G</original>
    <variation>R</variation>
    <location>
        <position position="412"/>
    </location>
</feature>
<feature type="sequence variant" id="VAR_003981" description="In GT1; type I; dbSNP:rs1598380253." evidence="35">
    <original>G</original>
    <variation>D</variation>
    <location>
        <position position="449"/>
    </location>
</feature>
<feature type="sequence variant" id="VAR_030458" description="In GT1; alteres the conformation of heterodimers such that they were neither recognized by the heterodimer-specific antibody A2A9 nor able to undergo further intracellular processing or transport to the cell surface.">
    <location>
        <begin position="456"/>
        <end position="457"/>
    </location>
</feature>
<feature type="sequence variant" id="VAR_030459" description="In GT1; uncertain significance; dbSNP:rs2143458780." evidence="10">
    <original>A</original>
    <variation>D</variation>
    <location>
        <position position="581"/>
    </location>
</feature>
<feature type="sequence variant" id="VAR_030460" description="In GT1; type I; dbSNP:rs76811038." evidence="22 43 46">
    <original>I</original>
    <variation>T</variation>
    <location>
        <position position="596"/>
    </location>
</feature>
<feature type="sequence variant" id="VAR_054821" description="In dbSNP:rs7207402.">
    <original>V</original>
    <variation>L</variation>
    <location>
        <position position="649"/>
    </location>
</feature>
<feature type="sequence variant" id="VAR_030461" description="In GT1; type II; the rate of subunit maturation and the surface exposure of glycoprotein IIb/beta-3 are strongly reduced; dbSNP:rs77961246." evidence="10 22 50">
    <original>C</original>
    <variation>R</variation>
    <location>
        <position position="705"/>
    </location>
</feature>
<feature type="sequence variant" id="VAR_030462" description="In GT1; uncertain significance; dbSNP:rs761174160." evidence="10">
    <original>L</original>
    <variation>V</variation>
    <location>
        <position position="752"/>
    </location>
</feature>
<feature type="sequence variant" id="VAR_030463" description="In GT1; uncertain significance; dbSNP:rs763762304." evidence="10">
    <original>R</original>
    <variation>P</variation>
    <location>
        <position position="755"/>
    </location>
</feature>
<feature type="sequence variant" id="VAR_003982" description="In GT1; type II; dbSNP:rs74475415." evidence="22 45 47">
    <original>Q</original>
    <variation>P</variation>
    <location>
        <position position="778"/>
    </location>
</feature>
<feature type="sequence variant" id="VAR_030464" description="In GT1; uncertain significance; dbSNP:rs1344532070." evidence="9">
    <original>L</original>
    <variation>P</variation>
    <location>
        <position position="847"/>
    </location>
</feature>
<feature type="sequence variant" id="VAR_003983" description="In alloantigen HPA-3B; dbSNP:rs5911." evidence="6 29">
    <original>I</original>
    <variation>S</variation>
    <location>
        <position position="874"/>
    </location>
</feature>
<feature type="sequence variant" id="VAR_069917" description="In GT1; severe type 1 phenotype; the mutation prevented normal ITGA2B/ITGB3 complex expression on the cell surface; dbSNP:rs77458039." evidence="22">
    <original>V</original>
    <variation>F</variation>
    <location>
        <position position="934"/>
    </location>
</feature>
<feature type="sequence variant" id="VAR_030465" description="In GT1; marked reduction in the rate of surface expression." evidence="18">
    <original>P</original>
    <variation>L</variation>
    <location>
        <position position="943"/>
    </location>
</feature>
<feature type="sequence variant" id="VAR_069918" description="In GT1; uncertain significance; severe type 1 phenotype; the mutation prevented normal ITGA2B/ITGB3 complex expression on the cell surface; the mutation may interfere with correct folding of the protein; dbSNP:rs80002943." evidence="22">
    <original>S</original>
    <variation>L</variation>
    <location>
        <position position="957"/>
    </location>
</feature>
<feature type="sequence variant" id="VAR_014177" description="In dbSNP:rs5914." evidence="6">
    <original>Y</original>
    <variation>N</variation>
    <location>
        <position position="968"/>
    </location>
</feature>
<feature type="sequence variant" id="VAR_030466" description="In GT1; much reduced surface expression of alpha-IIb/beta-3 and a block in the maturation of pro-alpha-IIb; dbSNP:rs78657866." evidence="14 22">
    <original>V</original>
    <variation>M</variation>
    <location>
        <position position="982"/>
    </location>
</feature>
<feature type="sequence variant" id="VAR_030467" description="In dbSNP:rs78165611." evidence="14 22">
    <original>A</original>
    <variation>T</variation>
    <location>
        <position position="989"/>
    </location>
</feature>
<feature type="sequence variant" id="VAR_030468" description="In GT1 and BDPLT16; uncertain significance; results in low surface expression of the mutant protein; dbSNP:rs879255514." evidence="43 49">
    <original>R</original>
    <variation>Q</variation>
    <location>
        <position position="1026"/>
    </location>
</feature>
<feature type="sequence variant" id="VAR_069919" description="In BDPLT16; uncertain significance; results in abnormal membrane ruffling and cytoplasmic protrusions as well as defective proplatelet formation; dbSNP:rs766503255." evidence="24">
    <original>R</original>
    <variation>W</variation>
    <location>
        <position position="1026"/>
    </location>
</feature>
<feature type="mutagenesis site" description="Imparts constitutive activity (ligand-binding) to alpha-IIb/beta-3." evidence="5">
    <original>PP</original>
    <variation>AA</variation>
    <location>
        <begin position="1029"/>
        <end position="1030"/>
    </location>
</feature>
<feature type="sequence conflict" description="In Ref. 2; AAA35926." evidence="52" ref="2">
    <original>P</original>
    <variation>A</variation>
    <location>
        <position position="23"/>
    </location>
</feature>
<feature type="sequence conflict" description="In Ref. 4; BAG37735." evidence="52" ref="4">
    <original>A</original>
    <variation>S</variation>
    <location>
        <position position="120"/>
    </location>
</feature>
<feature type="sequence conflict" description="In Ref. 3; AAA53150." evidence="52" ref="3">
    <original>GA</original>
    <variation>VP</variation>
    <location>
        <begin position="287"/>
        <end position="288"/>
    </location>
</feature>
<feature type="sequence conflict" description="In Ref. 2; AAA35926." evidence="52" ref="2">
    <original>E</original>
    <variation>D</variation>
    <location>
        <position position="346"/>
    </location>
</feature>
<feature type="sequence conflict" description="In Ref. 2; AAA35926." evidence="52" ref="2">
    <original>N</original>
    <variation>D</variation>
    <location>
        <position position="565"/>
    </location>
</feature>
<feature type="sequence conflict" description="In Ref. 11; CAA29987." evidence="52" ref="11">
    <original>L</original>
    <variation>V</variation>
    <location>
        <position position="566"/>
    </location>
</feature>
<feature type="sequence conflict" description="In Ref. 1; AAA60114." evidence="52" ref="1">
    <original>C</original>
    <variation>S</variation>
    <location>
        <position position="633"/>
    </location>
</feature>
<feature type="sequence conflict" description="In Ref. 11; CAA29987." evidence="52" ref="11">
    <original>Q</original>
    <variation>E</variation>
    <location>
        <position position="729"/>
    </location>
</feature>
<feature type="sequence conflict" description="In Ref. 3; AAA53150." evidence="52" ref="3">
    <original>P</original>
    <variation>A</variation>
    <location>
        <position position="971"/>
    </location>
</feature>
<feature type="sequence conflict" description="In Ref. 2; AAA35926 and 7; AAA52588." evidence="52" ref="2 7">
    <original>P</original>
    <variation>H</variation>
    <location>
        <position position="1029"/>
    </location>
</feature>
<feature type="sequence conflict" description="In Ref. 7; AAA52588." evidence="52" ref="7">
    <original>P</original>
    <variation>T</variation>
    <location>
        <position position="1030"/>
    </location>
</feature>
<feature type="strand" evidence="66">
    <location>
        <begin position="36"/>
        <end position="38"/>
    </location>
</feature>
<feature type="strand" evidence="66">
    <location>
        <begin position="40"/>
        <end position="43"/>
    </location>
</feature>
<feature type="strand" evidence="66">
    <location>
        <begin position="52"/>
        <end position="58"/>
    </location>
</feature>
<feature type="strand" evidence="58">
    <location>
        <begin position="60"/>
        <end position="62"/>
    </location>
</feature>
<feature type="strand" evidence="66">
    <location>
        <begin position="64"/>
        <end position="70"/>
    </location>
</feature>
<feature type="strand" evidence="66">
    <location>
        <begin position="78"/>
        <end position="80"/>
    </location>
</feature>
<feature type="strand" evidence="66">
    <location>
        <begin position="82"/>
        <end position="88"/>
    </location>
</feature>
<feature type="strand" evidence="65">
    <location>
        <begin position="91"/>
        <end position="94"/>
    </location>
</feature>
<feature type="strand" evidence="66">
    <location>
        <begin position="107"/>
        <end position="110"/>
    </location>
</feature>
<feature type="strand" evidence="66">
    <location>
        <begin position="113"/>
        <end position="118"/>
    </location>
</feature>
<feature type="strand" evidence="66">
    <location>
        <begin position="126"/>
        <end position="131"/>
    </location>
</feature>
<feature type="strand" evidence="66">
    <location>
        <begin position="134"/>
        <end position="139"/>
    </location>
</feature>
<feature type="strand" evidence="66">
    <location>
        <begin position="143"/>
        <end position="148"/>
    </location>
</feature>
<feature type="strand" evidence="60">
    <location>
        <begin position="151"/>
        <end position="153"/>
    </location>
</feature>
<feature type="strand" evidence="66">
    <location>
        <begin position="159"/>
        <end position="165"/>
    </location>
</feature>
<feature type="turn" evidence="66">
    <location>
        <begin position="166"/>
        <end position="169"/>
    </location>
</feature>
<feature type="strand" evidence="66">
    <location>
        <begin position="170"/>
        <end position="174"/>
    </location>
</feature>
<feature type="helix" evidence="66">
    <location>
        <begin position="183"/>
        <end position="188"/>
    </location>
</feature>
<feature type="turn" evidence="66">
    <location>
        <begin position="189"/>
        <end position="193"/>
    </location>
</feature>
<feature type="strand" evidence="66">
    <location>
        <begin position="202"/>
        <end position="206"/>
    </location>
</feature>
<feature type="strand" evidence="63">
    <location>
        <begin position="208"/>
        <end position="210"/>
    </location>
</feature>
<feature type="strand" evidence="66">
    <location>
        <begin position="211"/>
        <end position="216"/>
    </location>
</feature>
<feature type="helix" evidence="66">
    <location>
        <begin position="219"/>
        <end position="222"/>
    </location>
</feature>
<feature type="strand" evidence="66">
    <location>
        <begin position="225"/>
        <end position="230"/>
    </location>
</feature>
<feature type="helix" evidence="66">
    <location>
        <begin position="231"/>
        <end position="237"/>
    </location>
</feature>
<feature type="helix" evidence="66">
    <location>
        <begin position="259"/>
        <end position="261"/>
    </location>
</feature>
<feature type="strand" evidence="66">
    <location>
        <begin position="268"/>
        <end position="273"/>
    </location>
</feature>
<feature type="strand" evidence="67">
    <location>
        <begin position="279"/>
        <end position="281"/>
    </location>
</feature>
<feature type="strand" evidence="66">
    <location>
        <begin position="283"/>
        <end position="288"/>
    </location>
</feature>
<feature type="helix" evidence="66">
    <location>
        <begin position="291"/>
        <end position="294"/>
    </location>
</feature>
<feature type="strand" evidence="66">
    <location>
        <begin position="297"/>
        <end position="301"/>
    </location>
</feature>
<feature type="strand" evidence="66">
    <location>
        <begin position="307"/>
        <end position="312"/>
    </location>
</feature>
<feature type="strand" evidence="63">
    <location>
        <begin position="314"/>
        <end position="318"/>
    </location>
</feature>
<feature type="strand" evidence="66">
    <location>
        <begin position="324"/>
        <end position="327"/>
    </location>
</feature>
<feature type="strand" evidence="66">
    <location>
        <begin position="330"/>
        <end position="333"/>
    </location>
</feature>
<feature type="strand" evidence="66">
    <location>
        <begin position="336"/>
        <end position="341"/>
    </location>
</feature>
<feature type="strand" evidence="66">
    <location>
        <begin position="345"/>
        <end position="348"/>
    </location>
</feature>
<feature type="turn" evidence="66">
    <location>
        <begin position="349"/>
        <end position="351"/>
    </location>
</feature>
<feature type="strand" evidence="66">
    <location>
        <begin position="352"/>
        <end position="355"/>
    </location>
</feature>
<feature type="strand" evidence="66">
    <location>
        <begin position="358"/>
        <end position="362"/>
    </location>
</feature>
<feature type="strand" evidence="66">
    <location>
        <begin position="366"/>
        <end position="368"/>
    </location>
</feature>
<feature type="strand" evidence="66">
    <location>
        <begin position="375"/>
        <end position="379"/>
    </location>
</feature>
<feature type="strand" evidence="66">
    <location>
        <begin position="391"/>
        <end position="398"/>
    </location>
</feature>
<feature type="strand" evidence="66">
    <location>
        <begin position="400"/>
        <end position="402"/>
    </location>
</feature>
<feature type="strand" evidence="66">
    <location>
        <begin position="404"/>
        <end position="409"/>
    </location>
</feature>
<feature type="turn" evidence="62">
    <location>
        <begin position="413"/>
        <end position="416"/>
    </location>
</feature>
<feature type="strand" evidence="66">
    <location>
        <begin position="419"/>
        <end position="423"/>
    </location>
</feature>
<feature type="strand" evidence="58">
    <location>
        <begin position="427"/>
        <end position="430"/>
    </location>
</feature>
<feature type="strand" evidence="66">
    <location>
        <begin position="435"/>
        <end position="439"/>
    </location>
</feature>
<feature type="strand" evidence="66">
    <location>
        <begin position="450"/>
        <end position="456"/>
    </location>
</feature>
<feature type="strand" evidence="66">
    <location>
        <begin position="461"/>
        <end position="463"/>
    </location>
</feature>
<feature type="strand" evidence="66">
    <location>
        <begin position="465"/>
        <end position="470"/>
    </location>
</feature>
<feature type="helix" evidence="66">
    <location>
        <begin position="471"/>
        <end position="473"/>
    </location>
</feature>
<feature type="strand" evidence="66">
    <location>
        <begin position="475"/>
        <end position="479"/>
    </location>
</feature>
<feature type="strand" evidence="61">
    <location>
        <begin position="484"/>
        <end position="493"/>
    </location>
</feature>
<feature type="strand" evidence="69">
    <location>
        <begin position="495"/>
        <end position="497"/>
    </location>
</feature>
<feature type="strand" evidence="61">
    <location>
        <begin position="507"/>
        <end position="509"/>
    </location>
</feature>
<feature type="strand" evidence="61">
    <location>
        <begin position="512"/>
        <end position="525"/>
    </location>
</feature>
<feature type="strand" evidence="61">
    <location>
        <begin position="534"/>
        <end position="541"/>
    </location>
</feature>
<feature type="turn" evidence="61">
    <location>
        <begin position="542"/>
        <end position="544"/>
    </location>
</feature>
<feature type="helix" evidence="61">
    <location>
        <begin position="547"/>
        <end position="549"/>
    </location>
</feature>
<feature type="strand" evidence="61">
    <location>
        <begin position="551"/>
        <end position="554"/>
    </location>
</feature>
<feature type="turn" evidence="61">
    <location>
        <begin position="555"/>
        <end position="557"/>
    </location>
</feature>
<feature type="strand" evidence="61">
    <location>
        <begin position="559"/>
        <end position="567"/>
    </location>
</feature>
<feature type="strand" evidence="61">
    <location>
        <begin position="575"/>
        <end position="583"/>
    </location>
</feature>
<feature type="helix" evidence="61">
    <location>
        <begin position="586"/>
        <end position="588"/>
    </location>
</feature>
<feature type="strand" evidence="68">
    <location>
        <begin position="592"/>
        <end position="594"/>
    </location>
</feature>
<feature type="strand" evidence="61">
    <location>
        <begin position="596"/>
        <end position="603"/>
    </location>
</feature>
<feature type="strand" evidence="61">
    <location>
        <begin position="616"/>
        <end position="619"/>
    </location>
</feature>
<feature type="strand" evidence="61">
    <location>
        <begin position="622"/>
        <end position="627"/>
    </location>
</feature>
<feature type="turn" evidence="61">
    <location>
        <begin position="634"/>
        <end position="637"/>
    </location>
</feature>
<feature type="strand" evidence="61">
    <location>
        <begin position="643"/>
        <end position="651"/>
    </location>
</feature>
<feature type="strand" evidence="61">
    <location>
        <begin position="653"/>
        <end position="655"/>
    </location>
</feature>
<feature type="strand" evidence="61">
    <location>
        <begin position="662"/>
        <end position="670"/>
    </location>
</feature>
<feature type="strand" evidence="61">
    <location>
        <begin position="678"/>
        <end position="683"/>
    </location>
</feature>
<feature type="strand" evidence="61">
    <location>
        <begin position="688"/>
        <end position="695"/>
    </location>
</feature>
<feature type="helix" evidence="68">
    <location>
        <begin position="698"/>
        <end position="700"/>
    </location>
</feature>
<feature type="strand" evidence="61">
    <location>
        <begin position="705"/>
        <end position="708"/>
    </location>
</feature>
<feature type="strand" evidence="61">
    <location>
        <begin position="710"/>
        <end position="713"/>
    </location>
</feature>
<feature type="strand" evidence="61">
    <location>
        <begin position="715"/>
        <end position="721"/>
    </location>
</feature>
<feature type="strand" evidence="61">
    <location>
        <begin position="728"/>
        <end position="738"/>
    </location>
</feature>
<feature type="helix" evidence="68">
    <location>
        <begin position="742"/>
        <end position="744"/>
    </location>
</feature>
<feature type="strand" evidence="61">
    <location>
        <begin position="746"/>
        <end position="755"/>
    </location>
</feature>
<feature type="strand" evidence="61">
    <location>
        <begin position="759"/>
        <end position="761"/>
    </location>
</feature>
<feature type="strand" evidence="61">
    <location>
        <begin position="767"/>
        <end position="774"/>
    </location>
</feature>
<feature type="strand" evidence="61">
    <location>
        <begin position="779"/>
        <end position="792"/>
    </location>
</feature>
<feature type="strand" evidence="61">
    <location>
        <begin position="810"/>
        <end position="819"/>
    </location>
</feature>
<feature type="strand" evidence="61">
    <location>
        <begin position="821"/>
        <end position="823"/>
    </location>
</feature>
<feature type="strand" evidence="61">
    <location>
        <begin position="825"/>
        <end position="836"/>
    </location>
</feature>
<feature type="strand" evidence="61">
    <location>
        <begin position="842"/>
        <end position="854"/>
    </location>
</feature>
<feature type="strand" evidence="61">
    <location>
        <begin position="856"/>
        <end position="861"/>
    </location>
</feature>
<feature type="strand" evidence="61">
    <location>
        <begin position="906"/>
        <end position="909"/>
    </location>
</feature>
<feature type="turn" evidence="61">
    <location>
        <begin position="911"/>
        <end position="913"/>
    </location>
</feature>
<feature type="strand" evidence="61">
    <location>
        <begin position="916"/>
        <end position="926"/>
    </location>
</feature>
<feature type="strand" evidence="61">
    <location>
        <begin position="931"/>
        <end position="940"/>
    </location>
</feature>
<feature type="helix" evidence="61">
    <location>
        <begin position="942"/>
        <end position="945"/>
    </location>
</feature>
<feature type="strand" evidence="61">
    <location>
        <begin position="952"/>
        <end position="965"/>
    </location>
</feature>
<feature type="strand" evidence="61">
    <location>
        <begin position="967"/>
        <end position="969"/>
    </location>
</feature>
<feature type="strand" evidence="61">
    <location>
        <begin position="977"/>
        <end position="988"/>
    </location>
</feature>
<feature type="turn" evidence="59">
    <location>
        <begin position="991"/>
        <end position="994"/>
    </location>
</feature>
<feature type="turn" evidence="68">
    <location>
        <begin position="996"/>
        <end position="1001"/>
    </location>
</feature>
<feature type="helix" evidence="68">
    <location>
        <begin position="1002"/>
        <end position="1015"/>
    </location>
</feature>
<feature type="strand" evidence="64">
    <location>
        <begin position="1019"/>
        <end position="1027"/>
    </location>
</feature>
<feature type="helix" evidence="56">
    <location>
        <begin position="1028"/>
        <end position="1031"/>
    </location>
</feature>
<feature type="turn" evidence="57">
    <location>
        <begin position="1035"/>
        <end position="1038"/>
    </location>
</feature>
<evidence type="ECO:0000250" key="1">
    <source>
        <dbReference type="UniProtKB" id="O54890"/>
    </source>
</evidence>
<evidence type="ECO:0000250" key="2">
    <source>
        <dbReference type="UniProtKB" id="Q9QUM0"/>
    </source>
</evidence>
<evidence type="ECO:0000255" key="3"/>
<evidence type="ECO:0000255" key="4">
    <source>
        <dbReference type="PROSITE-ProRule" id="PRU00803"/>
    </source>
</evidence>
<evidence type="ECO:0000269" key="5">
    <source>
    </source>
</evidence>
<evidence type="ECO:0000269" key="6">
    <source>
    </source>
</evidence>
<evidence type="ECO:0000269" key="7">
    <source>
    </source>
</evidence>
<evidence type="ECO:0000269" key="8">
    <source>
    </source>
</evidence>
<evidence type="ECO:0000269" key="9">
    <source>
    </source>
</evidence>
<evidence type="ECO:0000269" key="10">
    <source>
    </source>
</evidence>
<evidence type="ECO:0000269" key="11">
    <source>
    </source>
</evidence>
<evidence type="ECO:0000269" key="12">
    <source>
    </source>
</evidence>
<evidence type="ECO:0000269" key="13">
    <source>
    </source>
</evidence>
<evidence type="ECO:0000269" key="14">
    <source>
    </source>
</evidence>
<evidence type="ECO:0000269" key="15">
    <source>
    </source>
</evidence>
<evidence type="ECO:0000269" key="16">
    <source>
    </source>
</evidence>
<evidence type="ECO:0000269" key="17">
    <source>
    </source>
</evidence>
<evidence type="ECO:0000269" key="18">
    <source>
    </source>
</evidence>
<evidence type="ECO:0000269" key="19">
    <source>
    </source>
</evidence>
<evidence type="ECO:0000269" key="20">
    <source>
    </source>
</evidence>
<evidence type="ECO:0000269" key="21">
    <source>
    </source>
</evidence>
<evidence type="ECO:0000269" key="22">
    <source>
    </source>
</evidence>
<evidence type="ECO:0000269" key="23">
    <source>
    </source>
</evidence>
<evidence type="ECO:0000269" key="24">
    <source>
    </source>
</evidence>
<evidence type="ECO:0000269" key="25">
    <source>
    </source>
</evidence>
<evidence type="ECO:0000269" key="26">
    <source>
    </source>
</evidence>
<evidence type="ECO:0000269" key="27">
    <source>
    </source>
</evidence>
<evidence type="ECO:0000269" key="28">
    <source>
    </source>
</evidence>
<evidence type="ECO:0000269" key="29">
    <source>
    </source>
</evidence>
<evidence type="ECO:0000269" key="30">
    <source>
    </source>
</evidence>
<evidence type="ECO:0000269" key="31">
    <source>
    </source>
</evidence>
<evidence type="ECO:0000269" key="32">
    <source>
    </source>
</evidence>
<evidence type="ECO:0000269" key="33">
    <source>
    </source>
</evidence>
<evidence type="ECO:0000269" key="34">
    <source>
    </source>
</evidence>
<evidence type="ECO:0000269" key="35">
    <source>
    </source>
</evidence>
<evidence type="ECO:0000269" key="36">
    <source>
    </source>
</evidence>
<evidence type="ECO:0000269" key="37">
    <source>
    </source>
</evidence>
<evidence type="ECO:0000269" key="38">
    <source>
    </source>
</evidence>
<evidence type="ECO:0000269" key="39">
    <source>
    </source>
</evidence>
<evidence type="ECO:0000269" key="40">
    <source>
    </source>
</evidence>
<evidence type="ECO:0000269" key="41">
    <source>
    </source>
</evidence>
<evidence type="ECO:0000269" key="42">
    <source>
    </source>
</evidence>
<evidence type="ECO:0000269" key="43">
    <source>
    </source>
</evidence>
<evidence type="ECO:0000269" key="44">
    <source>
    </source>
</evidence>
<evidence type="ECO:0000269" key="45">
    <source>
    </source>
</evidence>
<evidence type="ECO:0000269" key="46">
    <source>
    </source>
</evidence>
<evidence type="ECO:0000269" key="47">
    <source>
    </source>
</evidence>
<evidence type="ECO:0000269" key="48">
    <source>
    </source>
</evidence>
<evidence type="ECO:0000269" key="49">
    <source>
    </source>
</evidence>
<evidence type="ECO:0000269" key="50">
    <source>
    </source>
</evidence>
<evidence type="ECO:0000303" key="51">
    <source>
    </source>
</evidence>
<evidence type="ECO:0000305" key="52"/>
<evidence type="ECO:0007744" key="53">
    <source>
        <dbReference type="PDB" id="1TYE"/>
    </source>
</evidence>
<evidence type="ECO:0007744" key="54">
    <source>
        <dbReference type="PDB" id="3FCS"/>
    </source>
</evidence>
<evidence type="ECO:0007744" key="55">
    <source>
        <dbReference type="PDB" id="3FCU"/>
    </source>
</evidence>
<evidence type="ECO:0007829" key="56">
    <source>
        <dbReference type="PDB" id="1DPK"/>
    </source>
</evidence>
<evidence type="ECO:0007829" key="57">
    <source>
        <dbReference type="PDB" id="1DPQ"/>
    </source>
</evidence>
<evidence type="ECO:0007829" key="58">
    <source>
        <dbReference type="PDB" id="1TYE"/>
    </source>
</evidence>
<evidence type="ECO:0007829" key="59">
    <source>
        <dbReference type="PDB" id="2KNC"/>
    </source>
</evidence>
<evidence type="ECO:0007829" key="60">
    <source>
        <dbReference type="PDB" id="2VDL"/>
    </source>
</evidence>
<evidence type="ECO:0007829" key="61">
    <source>
        <dbReference type="PDB" id="3FCS"/>
    </source>
</evidence>
<evidence type="ECO:0007829" key="62">
    <source>
        <dbReference type="PDB" id="6V4P"/>
    </source>
</evidence>
<evidence type="ECO:0007829" key="63">
    <source>
        <dbReference type="PDB" id="7LA4"/>
    </source>
</evidence>
<evidence type="ECO:0007829" key="64">
    <source>
        <dbReference type="PDB" id="7SC4"/>
    </source>
</evidence>
<evidence type="ECO:0007829" key="65">
    <source>
        <dbReference type="PDB" id="7UCY"/>
    </source>
</evidence>
<evidence type="ECO:0007829" key="66">
    <source>
        <dbReference type="PDB" id="7UDH"/>
    </source>
</evidence>
<evidence type="ECO:0007829" key="67">
    <source>
        <dbReference type="PDB" id="7UJE"/>
    </source>
</evidence>
<evidence type="ECO:0007829" key="68">
    <source>
        <dbReference type="PDB" id="8GCD"/>
    </source>
</evidence>
<evidence type="ECO:0007829" key="69">
    <source>
        <dbReference type="PDB" id="8T2V"/>
    </source>
</evidence>
<accession>P08514</accession>
<accession>B2RCY8</accession>
<accession>O95366</accession>
<accession>Q14443</accession>
<accession>Q17R67</accession>
<proteinExistence type="evidence at protein level"/>